<comment type="function">
    <text evidence="1 7 10 15 17 22 27 30 37 38 40 41 44 48 50 51 52 53 54 55 56 57 59 60 61 64 65 69">Dipeptidyl carboxypeptidase that removes dipeptides from the C-terminus of a variety of circulating hormones, such as angiotensin I, bradykinin or enkephalins, thereby playing a key role in the regulation of blood pressure, electrolyte homeostasis or synaptic plasticity (PubMed:15615692, PubMed:20826823, PubMed:2558109, PubMed:4322742, PubMed:7523412, PubMed:7683654). Composed of two similar catalytic domains, each possessing a functional active site, with different selectivity for substrates (PubMed:10913258, PubMed:1320019, PubMed:1851160, PubMed:19773553, PubMed:7683654, PubMed:7876104). Plays a major role in the angiotensin-renin system that regulates blood pressure and sodium retention by the kidney by converting angiotensin I to angiotensin II, resulting in an increase of the vasoconstrictor activity of angiotensin (PubMed:11432860, PubMed:1851160, PubMed:19773553, PubMed:23056909, PubMed:4322742). Also able to inactivate bradykinin, a potent vasodilator, and therefore enhance the blood pressure response (PubMed:15615692, PubMed:2558109, PubMed:4322742, PubMed:6055465, PubMed:6270633, PubMed:7683654). Acts as a regulator of synaptic transmission by mediating cleavage of neuropeptide hormones, such as substance P, neurotensin or enkephalins (PubMed:15615692, PubMed:6208535, PubMed:6270633, PubMed:656131). Catalyzes degradation of different enkephalin neuropeptides (Met-enkephalin, Leu-enkephalin, Met-enkephalin-Arg-Phe and possibly Met-enkephalin-Arg-Gly-Leu) (PubMed:2982830, PubMed:6270633, PubMed:656131). Acts as a regulator of synaptic plasticity in the nucleus accumbens of the brain by mediating cleavage of Met-enkephalin-Arg-Phe, a strong ligand of Mu-type opioid receptor OPRM1, into Met-enkephalin (By similarity). Met-enkephalin-Arg-Phe cleavage by ACE decreases activation of OPRM1, leading to long-term synaptic potentiation of glutamate release (By similarity). Also acts as a regulator of hematopoietic stem cell differentiation by mediating degradation of hemoregulatory peptide N-acetyl-SDKP (AcSDKP) (PubMed:26403559, PubMed:7876104, PubMed:8257427, PubMed:8609242). Acts as a regulator of cannabinoid signaling pathway by mediating degradation of hemopressin, an antagonist peptide of the cannabinoid receptor CNR1 (PubMed:18077343). Involved in amyloid-beta metabolism by catalyzing degradation of Amyloid-beta protein 40 and Amyloid-beta protein 42 peptides, thereby preventing plaque formation (PubMed:11604391, PubMed:16154999, PubMed:19773553). Catalyzes cleavage of cholecystokinin (maturation of Cholecystokinin-8 and Cholecystokinin-5) and Gonadoliberin-1 (both maturation and degradation) hormones (PubMed:10336644, PubMed:2983326, PubMed:7683654, PubMed:9371719). Degradation of hemoregulatory peptide N-acetyl-SDKP (AcSDKP) and amyloid-beta proteins is mediated by the N-terminal catalytic domain, while angiotensin I and cholecystokinin cleavage is mediated by the C-terminal catalytic region (PubMed:10336644, PubMed:19773553, PubMed:7876104).</text>
</comment>
<comment type="function">
    <molecule>Angiotensin-converting enzyme, soluble form</molecule>
    <text evidence="9 14 58 63">Soluble form that is released in blood plasma and other body fluids following proteolytic cleavage in the juxtamembrane stalk region.</text>
</comment>
<comment type="function">
    <molecule>Isoform Testis-specific</molecule>
    <text evidence="1 35 36 45">Isoform produced by alternative promoter usage that is specifically expressed in spermatocytes and adult testis, and which is required for male fertility (PubMed:1651327, PubMed:1668266). In contrast to somatic isoforms, only contains one catalytic domain (PubMed:1651327, PubMed:1668266). Acts as a dipeptidyl carboxypeptidase that removes dipeptides from the C-terminus of substrates (PubMed:1668266, PubMed:24297181). The identity of substrates that are needed for male fertility is unknown (By similarity). May also have a glycosidase activity which releases GPI-anchored proteins from the membrane by cleaving the mannose linkage in the GPI moiety. The GPIase activity was reported to be essential for the egg-binding ability of the sperm (By similarity). This activity is however unclear and has been challenged by other groups, suggesting that it may be indirect (By similarity).</text>
</comment>
<comment type="catalytic activity">
    <reaction evidence="10 13 21 22 41 48 53 62">
        <text>Release of a C-terminal dipeptide, oligopeptide-|-Xaa-Yaa, when Xaa is not Pro, and Yaa is neither Asp nor Glu. Thus, conversion of angiotensin I to angiotensin II, with increase in vasoconstrictor activity, but no action on angiotensin II.</text>
        <dbReference type="EC" id="3.4.15.1"/>
    </reaction>
</comment>
<comment type="catalytic activity">
    <reaction evidence="15 38 40 44 53 56">
        <text>angiotensin I + H2O = L-histidyl-L-leucine + angiotensin II</text>
        <dbReference type="Rhea" id="RHEA:63560"/>
        <dbReference type="ChEBI" id="CHEBI:15377"/>
        <dbReference type="ChEBI" id="CHEBI:58506"/>
        <dbReference type="ChEBI" id="CHEBI:147350"/>
        <dbReference type="ChEBI" id="CHEBI:147392"/>
        <dbReference type="EC" id="3.4.15.1"/>
    </reaction>
    <physiologicalReaction direction="left-to-right" evidence="15 38 40 44 53 56">
        <dbReference type="Rhea" id="RHEA:63561"/>
    </physiologicalReaction>
</comment>
<comment type="catalytic activity">
    <reaction evidence="53 54 56 60 85">
        <text>bradykinin + H2O = L-Phe-L-Arg + bradykinin(1-7)</text>
        <dbReference type="Rhea" id="RHEA:71451"/>
        <dbReference type="ChEBI" id="CHEBI:15377"/>
        <dbReference type="ChEBI" id="CHEBI:132988"/>
        <dbReference type="ChEBI" id="CHEBI:133147"/>
        <dbReference type="ChEBI" id="CHEBI:147352"/>
    </reaction>
    <physiologicalReaction direction="left-to-right" evidence="53 54 56 60 85">
        <dbReference type="Rhea" id="RHEA:71452"/>
    </physiologicalReaction>
</comment>
<comment type="catalytic activity">
    <reaction evidence="55">
        <text>substance P + H2O = substance P(1-9) + L-Leu-L-Met-NH2</text>
        <dbReference type="Rhea" id="RHEA:71459"/>
        <dbReference type="ChEBI" id="CHEBI:15377"/>
        <dbReference type="ChEBI" id="CHEBI:190692"/>
        <dbReference type="ChEBI" id="CHEBI:190693"/>
        <dbReference type="ChEBI" id="CHEBI:190700"/>
    </reaction>
    <physiologicalReaction direction="left-to-right" evidence="55">
        <dbReference type="Rhea" id="RHEA:71460"/>
    </physiologicalReaction>
</comment>
<comment type="catalytic activity">
    <reaction evidence="55">
        <text>substance P + H2O = substance P(1-8) + Gly-L-Leu-L-Met-NH2</text>
        <dbReference type="Rhea" id="RHEA:71463"/>
        <dbReference type="ChEBI" id="CHEBI:15377"/>
        <dbReference type="ChEBI" id="CHEBI:190692"/>
        <dbReference type="ChEBI" id="CHEBI:190694"/>
        <dbReference type="ChEBI" id="CHEBI:190699"/>
    </reaction>
    <physiologicalReaction direction="left-to-right" evidence="55">
        <dbReference type="Rhea" id="RHEA:71464"/>
    </physiologicalReaction>
</comment>
<comment type="catalytic activity">
    <reaction evidence="55">
        <text>substance P + H2O = L-Phe-L-Phe-Gly-L-Leu-L-Met-NH2 + substance P(1-6)</text>
        <dbReference type="Rhea" id="RHEA:71471"/>
        <dbReference type="ChEBI" id="CHEBI:15377"/>
        <dbReference type="ChEBI" id="CHEBI:190692"/>
        <dbReference type="ChEBI" id="CHEBI:190696"/>
        <dbReference type="ChEBI" id="CHEBI:190697"/>
    </reaction>
    <physiologicalReaction direction="left-to-right" evidence="55">
        <dbReference type="Rhea" id="RHEA:71472"/>
    </physiologicalReaction>
</comment>
<comment type="catalytic activity">
    <reaction evidence="55">
        <text>neurotensin + H2O = neurotensin(1-11) + L-isoleucyl-L-leucine</text>
        <dbReference type="Rhea" id="RHEA:71475"/>
        <dbReference type="ChEBI" id="CHEBI:15377"/>
        <dbReference type="ChEBI" id="CHEBI:147362"/>
        <dbReference type="ChEBI" id="CHEBI:190704"/>
        <dbReference type="ChEBI" id="CHEBI:190706"/>
    </reaction>
    <physiologicalReaction direction="left-to-right" evidence="55">
        <dbReference type="Rhea" id="RHEA:71476"/>
    </physiologicalReaction>
</comment>
<comment type="catalytic activity">
    <reaction evidence="50 61 64">
        <text>goralatide + H2O = N-acetyl-L-seryl-L-aspartate + L-lysyl-L-proline</text>
        <dbReference type="Rhea" id="RHEA:71455"/>
        <dbReference type="ChEBI" id="CHEBI:15377"/>
        <dbReference type="ChEBI" id="CHEBI:190701"/>
        <dbReference type="ChEBI" id="CHEBI:190702"/>
        <dbReference type="ChEBI" id="CHEBI:190703"/>
    </reaction>
    <physiologicalReaction direction="left-to-right" evidence="50 61 64">
        <dbReference type="Rhea" id="RHEA:71456"/>
    </physiologicalReaction>
</comment>
<comment type="catalytic activity">
    <reaction evidence="56 57">
        <text>Met-enkephalin + H2O = L-phenylalanyl-L-methionine + L-tyrosylglycylglycine</text>
        <dbReference type="Rhea" id="RHEA:71483"/>
        <dbReference type="ChEBI" id="CHEBI:15377"/>
        <dbReference type="ChEBI" id="CHEBI:189868"/>
        <dbReference type="ChEBI" id="CHEBI:190708"/>
        <dbReference type="ChEBI" id="CHEBI:190709"/>
    </reaction>
    <physiologicalReaction direction="left-to-right" evidence="56 57">
        <dbReference type="Rhea" id="RHEA:71484"/>
    </physiologicalReaction>
</comment>
<comment type="catalytic activity">
    <reaction evidence="56 57">
        <text>Leu-enkephalin + H2O = L-tyrosylglycylglycine + L-phenylalanyl-L-leucine</text>
        <dbReference type="Rhea" id="RHEA:71487"/>
        <dbReference type="ChEBI" id="CHEBI:15377"/>
        <dbReference type="ChEBI" id="CHEBI:190689"/>
        <dbReference type="ChEBI" id="CHEBI:190708"/>
        <dbReference type="ChEBI" id="CHEBI:190710"/>
    </reaction>
    <physiologicalReaction direction="left-to-right" evidence="56 57">
        <dbReference type="Rhea" id="RHEA:71488"/>
    </physiologicalReaction>
</comment>
<comment type="catalytic activity">
    <reaction evidence="1">
        <text>Met-enkephalin-Arg-Phe + H2O = L-arginyl-L-phenylalanine + Met-enkephalin</text>
        <dbReference type="Rhea" id="RHEA:70675"/>
        <dbReference type="ChEBI" id="CHEBI:15377"/>
        <dbReference type="ChEBI" id="CHEBI:189868"/>
        <dbReference type="ChEBI" id="CHEBI:189869"/>
        <dbReference type="ChEBI" id="CHEBI:189870"/>
    </reaction>
    <physiologicalReaction direction="left-to-right" evidence="1">
        <dbReference type="Rhea" id="RHEA:70676"/>
    </physiologicalReaction>
</comment>
<comment type="catalytic activity">
    <molecule>Isoform Testis-specific</molecule>
    <reaction evidence="36">
        <text>Release of a C-terminal dipeptide, oligopeptide-|-Xaa-Yaa, when Xaa is not Pro, and Yaa is neither Asp nor Glu. Thus, conversion of angiotensin I to angiotensin II, with increase in vasoconstrictor activity, but no action on angiotensin II.</text>
        <dbReference type="EC" id="3.4.15.1"/>
    </reaction>
</comment>
<comment type="cofactor">
    <cofactor evidence="20 32 34 41 44 50 62">
        <name>Zn(2+)</name>
        <dbReference type="ChEBI" id="CHEBI:29105"/>
    </cofactor>
    <text evidence="20 32 34">Binds 2 Zn(2+) ions per subunit.</text>
</comment>
<comment type="cofactor">
    <molecule>Isoform Testis-specific</molecule>
    <cofactor evidence="34 42 45">
        <name>Zn(2+)</name>
        <dbReference type="ChEBI" id="CHEBI:29105"/>
    </cofactor>
    <text evidence="34 42 45">Isoform Testis-specific only binds 1 Zn(2+) ion per subunit.</text>
</comment>
<comment type="cofactor">
    <cofactor evidence="15 20 32">
        <name>chloride</name>
        <dbReference type="ChEBI" id="CHEBI:17996"/>
    </cofactor>
    <text evidence="20 32">Binds 3 chloride ions per subunit.</text>
</comment>
<comment type="cofactor">
    <molecule>Isoform Testis-specific</molecule>
    <cofactor evidence="45">
        <name>chloride</name>
        <dbReference type="ChEBI" id="CHEBI:17996"/>
    </cofactor>
</comment>
<comment type="activity regulation">
    <text evidence="15 20 22 27 32 55 56 60 61 65">The dipeptidyl carboxypeptidase activity is strongly activated by chloride (PubMed:11432860, PubMed:12540854, PubMed:15615692, PubMed:16476442, PubMed:7683654). The dipeptidyl carboxypeptidase activity is specifically inhibited by lisinopril, captopril and enalaprilat (PubMed:12540854, PubMed:1320019, PubMed:16476442, PubMed:6208535, PubMed:6270633, PubMed:7876104, PubMed:8609242).</text>
</comment>
<comment type="activity regulation">
    <molecule>Isoform Testis-specific</molecule>
    <text evidence="36 42">Strongly inhibited by lisinopril and captopril.</text>
</comment>
<comment type="biophysicochemical properties">
    <kinetics>
        <KM evidence="13 21">2.51 mM for Hip-His-Leu</KM>
        <KM evidence="86">30 uM for angiotensin I</KM>
        <KM evidence="38">16 uM for angiotensin I</KM>
        <KM evidence="86">1 uM for bradykinin</KM>
        <KM evidence="60">0.18 uM for bradykinin</KM>
        <KM evidence="56">1000 uM for Met-enkephalin</KM>
        <KM evidence="56">1000 uM for Leu-enkephalin</KM>
        <KM evidence="61">41 uM for hemoregulatory peptide N-acetyl-SDKP (AcSDKP)</KM>
        <KM evidence="61">31 uM for hemoregulatory peptide N-acetyl-SDKP (AcSDKP) for the active site at the N-terminus</KM>
        <KM evidence="61">39 uM for hemoregulatory peptide N-acetyl-SDKP (AcSDKP) for the active site at the C-terminus</KM>
        <KM evidence="69">9 uM for GWMDFGRR peptide (Cholecystokinin-5-GRR)</KM>
        <text evidence="56 61">kcat is 500 min(-1) for angiotensin I (PubMed:6270633). kcat is 500 min(-1) for bradykinin (PubMed:6270633). kcat is 3500 min(-1) for Met-enkephalin (PubMed:6270633). kcat is 700 min(-1) for Leu-enkephalin (PubMed:6270633). kcat is 12 sec(-1) for the hemoregulatory peptide N-acetyl-SDKP (AcSDKP) (PubMed:7876104).</text>
    </kinetics>
</comment>
<comment type="subunit">
    <text evidence="2 33">Monomer and homodimer; homodimerizes following binding to an inhibitor (PubMed:16476786). Interacts with calmodulin (CALM1, CALM2 or CALM3); interaction takes place in the cytoplasmic region and regulates phosphorylation and proteolytic cleavage (By similarity).</text>
</comment>
<comment type="interaction">
    <interactant intactId="EBI-25497695">
        <id>P12821-3</id>
    </interactant>
    <interactant intactId="EBI-703066">
        <id>P05556</id>
        <label>ITGB1</label>
    </interactant>
    <organismsDiffer>false</organismsDiffer>
    <experiments>2</experiments>
</comment>
<comment type="subcellular location">
    <subcellularLocation>
        <location evidence="18">Cell membrane</location>
        <topology evidence="3">Single-pass type I membrane protein</topology>
    </subcellularLocation>
    <subcellularLocation>
        <location evidence="1">Cytoplasm</location>
    </subcellularLocation>
    <text evidence="1">Detected in both cell membrane and cytoplasm in neurons.</text>
</comment>
<comment type="subcellular location">
    <molecule>Angiotensin-converting enzyme, soluble form</molecule>
    <subcellularLocation>
        <location evidence="9 14 58 63">Secreted</location>
    </subcellularLocation>
</comment>
<comment type="subcellular location">
    <molecule>Isoform Testis-specific</molecule>
    <subcellularLocation>
        <location evidence="36 66">Cell membrane</location>
        <topology evidence="3">Single-pass type I membrane protein</topology>
    </subcellularLocation>
    <subcellularLocation>
        <location evidence="36">Secreted</location>
    </subcellularLocation>
    <text evidence="36">The testis-specific isoform can be cleaved before the transmembrane region, releasing a soluble form.</text>
</comment>
<comment type="alternative products">
    <event type="alternative promoter"/>
    <event type="alternative splicing"/>
    <isoform>
        <id>P12821-1</id>
        <name>Somatic-1</name>
        <sequence type="displayed"/>
    </isoform>
    <isoform>
        <id>P12821-2</id>
        <name>Somatic-2</name>
        <name>Soluble</name>
        <sequence type="described" ref="VSP_029932 VSP_029933"/>
    </isoform>
    <isoform>
        <id>P12821-3</id>
        <id>P22966-1</id>
        <name>Testis-specific</name>
        <name>ACE-T</name>
        <name evidence="78">ACEt</name>
        <name evidence="71 72">tACE</name>
        <name evidence="71">hTACE</name>
        <sequence type="described" ref="VSP_035120 VSP_035121"/>
    </isoform>
    <isoform>
        <id>P12821-4</id>
        <name>4</name>
        <sequence type="described" ref="VSP_054836 VSP_054837"/>
    </isoform>
</comment>
<comment type="tissue specificity">
    <text evidence="11 12 19 28">Ubiquitously expressed, with highest levels in lung, kidney, heart, gastrointestinal system and prostate.</text>
</comment>
<comment type="tissue specificity">
    <molecule>Isoform Testis-specific</molecule>
    <text evidence="46 47">Specifically expressed in spermatocytes and adult testis.</text>
</comment>
<comment type="induction">
    <text evidence="24 28">Up-regulated in failing heart.</text>
</comment>
<comment type="PTM">
    <molecule>Angiotensin-converting enzyme, soluble form</molecule>
    <text evidence="9 14 58 63">Produced following proteolytic cleavage by secretase enzymes that cleave the transmembrane form in the juxtamembrane stalk region upstream of the transmembrane region (PubMed:10769174, PubMed:11274151, PubMed:7499427, PubMed:8253769). Cleavage can take place at different sites of the juxtamembrane stalk region (PubMed:10769174, PubMed:11274151, PubMed:7499427, PubMed:8253769).</text>
</comment>
<comment type="PTM">
    <text evidence="2 18">Phosphorylated by CK2 on Ser-1299; which allows membrane retention (PubMed:12386153). Phosphorylated on tyrosine residues on its extracellular part, promoting cleavage by secretase enzymes and formation of the soluble form (Angiotensin-converting enzyme, soluble form) (By similarity).</text>
</comment>
<comment type="disease" evidence="26">
    <disease id="DI-01835">
        <name>Ischemic stroke</name>
        <acronym>ISCHSTR</acronym>
        <description>A stroke is an acute neurologic event leading to death of neural tissue of the brain and resulting in loss of motor, sensory and/or cognitive function. Ischemic strokes, resulting from vascular occlusion, is considered to be a highly complex disease consisting of a group of heterogeneous disorders with multiple genetic and environmental risk factors.</description>
        <dbReference type="MIM" id="601367"/>
    </disease>
    <text>Disease susceptibility is associated with variants affecting the gene represented in this entry.</text>
</comment>
<comment type="disease" evidence="29">
    <disease id="DI-02257">
        <name>Renal tubular dysgenesis</name>
        <acronym>RTD</acronym>
        <description>Autosomal recessive severe disorder of renal tubular development characterized by persistent fetal anuria and perinatal death, probably due to pulmonary hypoplasia from early-onset oligohydramnios (the Potter phenotype).</description>
        <dbReference type="MIM" id="267430"/>
    </disease>
    <text>The disease is caused by variants affecting the gene represented in this entry.</text>
</comment>
<comment type="disease" evidence="5">
    <disease id="DI-02756">
        <name>Microvascular complications of diabetes 3</name>
        <acronym>MVCD3</acronym>
        <description>Pathological conditions that develop in numerous tissues and organs as a consequence of diabetes mellitus. They include diabetic retinopathy, diabetic nephropathy leading to end-stage renal disease, and diabetic neuropathy. Diabetic retinopathy remains the major cause of new-onset blindness among diabetic adults. It is characterized by vascular permeability and increased tissue ischemia and angiogenesis.</description>
        <dbReference type="MIM" id="612624"/>
    </disease>
    <text>Disease susceptibility is associated with variants affecting the gene represented in this entry.</text>
</comment>
<comment type="disease" evidence="25">
    <disease id="DI-03406">
        <name>Intracerebral hemorrhage</name>
        <acronym>ICH</acronym>
        <description>A pathological condition characterized by bleeding into one or both cerebral hemispheres including the basal ganglia and the cerebral cortex. It is often associated with hypertension and craniocerebral trauma. Intracerebral bleeding is a common cause of stroke.</description>
        <dbReference type="MIM" id="614519"/>
    </disease>
    <text>Disease susceptibility is associated with variants affecting the gene represented in this entry.</text>
</comment>
<comment type="miscellaneous">
    <text>Inhibitors of ACE are commonly used to treat hypertension and some types of renal and cardiac dysfunction.</text>
</comment>
<comment type="miscellaneous">
    <molecule>Isoform Somatic-2</molecule>
    <text evidence="80">Incomplete sequence.</text>
</comment>
<comment type="similarity">
    <text evidence="80">Belongs to the peptidase M2 family.</text>
</comment>
<comment type="sequence caution" evidence="80">
    <conflict type="erroneous initiation">
        <sequence resource="EMBL-CDS" id="BAD92208"/>
    </conflict>
    <text>Extended N-terminus.</text>
</comment>
<accession>P12821</accession>
<accession>B0LPF0</accession>
<accession>B4DXI3</accession>
<accession>E7EU16</accession>
<accession>P22966</accession>
<accession>Q53YX9</accession>
<accession>Q59GY8</accession>
<accession>Q7M4L4</accession>
<protein>
    <recommendedName>
        <fullName evidence="75">Angiotensin-converting enzyme</fullName>
        <shortName evidence="75">ACE</shortName>
        <ecNumber evidence="10 13 21 22 53 62">3.4.15.1</ecNumber>
    </recommendedName>
    <alternativeName>
        <fullName evidence="76">Dipeptidyl carboxypeptidase I</fullName>
    </alternativeName>
    <alternativeName>
        <fullName evidence="77">Kininase II</fullName>
    </alternativeName>
    <cdAntigenName>CD143</cdAntigenName>
    <component>
        <recommendedName>
            <fullName>Angiotensin-converting enzyme, soluble form</fullName>
        </recommendedName>
    </component>
</protein>
<organism>
    <name type="scientific">Homo sapiens</name>
    <name type="common">Human</name>
    <dbReference type="NCBI Taxonomy" id="9606"/>
    <lineage>
        <taxon>Eukaryota</taxon>
        <taxon>Metazoa</taxon>
        <taxon>Chordata</taxon>
        <taxon>Craniata</taxon>
        <taxon>Vertebrata</taxon>
        <taxon>Euteleostomi</taxon>
        <taxon>Mammalia</taxon>
        <taxon>Eutheria</taxon>
        <taxon>Euarchontoglires</taxon>
        <taxon>Primates</taxon>
        <taxon>Haplorrhini</taxon>
        <taxon>Catarrhini</taxon>
        <taxon>Hominidae</taxon>
        <taxon>Homo</taxon>
    </lineage>
</organism>
<dbReference type="EC" id="3.4.15.1" evidence="10 13 21 22 53 62"/>
<dbReference type="EMBL" id="J04144">
    <property type="protein sequence ID" value="AAA51684.1"/>
    <property type="molecule type" value="mRNA"/>
</dbReference>
<dbReference type="EMBL" id="M26657">
    <property type="protein sequence ID" value="AAA60611.1"/>
    <property type="molecule type" value="mRNA"/>
</dbReference>
<dbReference type="EMBL" id="X16295">
    <property type="protein sequence ID" value="CAA34362.1"/>
    <property type="molecule type" value="mRNA"/>
</dbReference>
<dbReference type="EMBL" id="AF118569">
    <property type="protein sequence ID" value="AAD28560.1"/>
    <property type="molecule type" value="Genomic_DNA"/>
</dbReference>
<dbReference type="EMBL" id="AY436326">
    <property type="protein sequence ID" value="AAR03504.1"/>
    <property type="molecule type" value="Genomic_DNA"/>
</dbReference>
<dbReference type="EMBL" id="AK301988">
    <property type="protein sequence ID" value="BAG63395.1"/>
    <property type="molecule type" value="mRNA"/>
</dbReference>
<dbReference type="EMBL" id="EU332840">
    <property type="protein sequence ID" value="ABY87529.1"/>
    <property type="molecule type" value="Genomic_DNA"/>
</dbReference>
<dbReference type="EMBL" id="AB208971">
    <property type="protein sequence ID" value="BAD92208.1"/>
    <property type="status" value="ALT_INIT"/>
    <property type="molecule type" value="mRNA"/>
</dbReference>
<dbReference type="EMBL" id="AC113554">
    <property type="status" value="NOT_ANNOTATED_CDS"/>
    <property type="molecule type" value="Genomic_DNA"/>
</dbReference>
<dbReference type="CCDS" id="CCDS11637.1">
    <molecule id="P12821-1"/>
</dbReference>
<dbReference type="CCDS" id="CCDS45755.1">
    <molecule id="P12821-3"/>
</dbReference>
<dbReference type="CCDS" id="CCDS54155.1">
    <molecule id="P12821-4"/>
</dbReference>
<dbReference type="PIR" id="A31759">
    <property type="entry name" value="A31759"/>
</dbReference>
<dbReference type="PIR" id="PW0053">
    <property type="entry name" value="PW0053"/>
</dbReference>
<dbReference type="PIR" id="S05238">
    <property type="entry name" value="S05238"/>
</dbReference>
<dbReference type="RefSeq" id="NP_000780.1">
    <molecule id="P12821-1"/>
    <property type="nucleotide sequence ID" value="NM_000789.4"/>
</dbReference>
<dbReference type="RefSeq" id="NP_001171528.1">
    <molecule id="P12821-4"/>
    <property type="nucleotide sequence ID" value="NM_001178057.2"/>
</dbReference>
<dbReference type="RefSeq" id="NP_690043.1">
    <molecule id="P12821-3"/>
    <property type="nucleotide sequence ID" value="NM_152830.3"/>
</dbReference>
<dbReference type="PDB" id="1O86">
    <property type="method" value="X-ray"/>
    <property type="resolution" value="2.00 A"/>
    <property type="chains" value="A=642-1230"/>
</dbReference>
<dbReference type="PDB" id="1O8A">
    <property type="method" value="X-ray"/>
    <property type="resolution" value="2.00 A"/>
    <property type="chains" value="A=642-1230"/>
</dbReference>
<dbReference type="PDB" id="1UZE">
    <property type="method" value="X-ray"/>
    <property type="resolution" value="1.82 A"/>
    <property type="chains" value="A=642-1230"/>
</dbReference>
<dbReference type="PDB" id="1UZF">
    <property type="method" value="X-ray"/>
    <property type="resolution" value="2.00 A"/>
    <property type="chains" value="A=642-1230"/>
</dbReference>
<dbReference type="PDB" id="2C6F">
    <property type="method" value="X-ray"/>
    <property type="resolution" value="3.01 A"/>
    <property type="chains" value="A/B=30-641"/>
</dbReference>
<dbReference type="PDB" id="2C6N">
    <property type="method" value="X-ray"/>
    <property type="resolution" value="3.00 A"/>
    <property type="chains" value="A/B=30-641"/>
</dbReference>
<dbReference type="PDB" id="2IUL">
    <property type="method" value="X-ray"/>
    <property type="resolution" value="2.01 A"/>
    <property type="chains" value="A=642-1232"/>
</dbReference>
<dbReference type="PDB" id="2IUX">
    <property type="method" value="X-ray"/>
    <property type="resolution" value="2.80 A"/>
    <property type="chains" value="A=642-1232"/>
</dbReference>
<dbReference type="PDB" id="2OC2">
    <property type="method" value="X-ray"/>
    <property type="resolution" value="2.25 A"/>
    <property type="chains" value="A=642-1232"/>
</dbReference>
<dbReference type="PDB" id="2XY9">
    <property type="method" value="X-ray"/>
    <property type="resolution" value="1.97 A"/>
    <property type="chains" value="A=645-1228"/>
</dbReference>
<dbReference type="PDB" id="2XYD">
    <property type="method" value="X-ray"/>
    <property type="resolution" value="2.15 A"/>
    <property type="chains" value="A/B=30-639"/>
</dbReference>
<dbReference type="PDB" id="2YDM">
    <property type="method" value="X-ray"/>
    <property type="resolution" value="2.44 A"/>
    <property type="chains" value="A=642-1230"/>
</dbReference>
<dbReference type="PDB" id="3BKK">
    <property type="method" value="X-ray"/>
    <property type="resolution" value="2.17 A"/>
    <property type="chains" value="A=642-1232"/>
</dbReference>
<dbReference type="PDB" id="3BKL">
    <property type="method" value="X-ray"/>
    <property type="resolution" value="2.18 A"/>
    <property type="chains" value="A=642-1232"/>
</dbReference>
<dbReference type="PDB" id="3L3N">
    <property type="method" value="X-ray"/>
    <property type="resolution" value="2.30 A"/>
    <property type="chains" value="A=642-1232"/>
</dbReference>
<dbReference type="PDB" id="3NXQ">
    <property type="method" value="X-ray"/>
    <property type="resolution" value="1.99 A"/>
    <property type="chains" value="A/B=30-658"/>
</dbReference>
<dbReference type="PDB" id="4APH">
    <property type="method" value="X-ray"/>
    <property type="resolution" value="1.99 A"/>
    <property type="chains" value="A=642-1230"/>
</dbReference>
<dbReference type="PDB" id="4APJ">
    <property type="method" value="X-ray"/>
    <property type="resolution" value="2.60 A"/>
    <property type="chains" value="A=642-1230"/>
</dbReference>
<dbReference type="PDB" id="4BXK">
    <property type="method" value="X-ray"/>
    <property type="resolution" value="2.20 A"/>
    <property type="chains" value="A/B=30-657"/>
</dbReference>
<dbReference type="PDB" id="4BZR">
    <property type="method" value="X-ray"/>
    <property type="resolution" value="1.84 A"/>
    <property type="chains" value="A=642-1230"/>
</dbReference>
<dbReference type="PDB" id="4BZS">
    <property type="method" value="X-ray"/>
    <property type="resolution" value="2.10 A"/>
    <property type="chains" value="A/B=30-657"/>
</dbReference>
<dbReference type="PDB" id="4C2N">
    <property type="method" value="X-ray"/>
    <property type="resolution" value="2.59 A"/>
    <property type="chains" value="A=642-1230"/>
</dbReference>
<dbReference type="PDB" id="4C2O">
    <property type="method" value="X-ray"/>
    <property type="resolution" value="1.80 A"/>
    <property type="chains" value="A=642-1230"/>
</dbReference>
<dbReference type="PDB" id="4C2P">
    <property type="method" value="X-ray"/>
    <property type="resolution" value="1.99 A"/>
    <property type="chains" value="A=642-1230"/>
</dbReference>
<dbReference type="PDB" id="4C2Q">
    <property type="method" value="X-ray"/>
    <property type="resolution" value="2.40 A"/>
    <property type="chains" value="A=642-1230"/>
</dbReference>
<dbReference type="PDB" id="4C2R">
    <property type="method" value="X-ray"/>
    <property type="resolution" value="2.30 A"/>
    <property type="chains" value="A=642-1230"/>
</dbReference>
<dbReference type="PDB" id="4CA5">
    <property type="method" value="X-ray"/>
    <property type="resolution" value="1.85 A"/>
    <property type="chains" value="A=642-1230"/>
</dbReference>
<dbReference type="PDB" id="4CA6">
    <property type="method" value="X-ray"/>
    <property type="resolution" value="1.91 A"/>
    <property type="chains" value="A/B=30-639"/>
</dbReference>
<dbReference type="PDB" id="4UFA">
    <property type="method" value="X-ray"/>
    <property type="resolution" value="1.80 A"/>
    <property type="chains" value="A/B=30-657"/>
</dbReference>
<dbReference type="PDB" id="4UFB">
    <property type="method" value="X-ray"/>
    <property type="resolution" value="1.80 A"/>
    <property type="chains" value="A/B/C/D=30-657"/>
</dbReference>
<dbReference type="PDB" id="5AM8">
    <property type="method" value="X-ray"/>
    <property type="resolution" value="1.90 A"/>
    <property type="chains" value="A/B/C/D=30-658"/>
</dbReference>
<dbReference type="PDB" id="5AM9">
    <property type="method" value="X-ray"/>
    <property type="resolution" value="1.80 A"/>
    <property type="chains" value="A/B/C/D=30-658"/>
</dbReference>
<dbReference type="PDB" id="5AMA">
    <property type="method" value="X-ray"/>
    <property type="resolution" value="1.80 A"/>
    <property type="chains" value="A/B/C/D=30-658"/>
</dbReference>
<dbReference type="PDB" id="5AMB">
    <property type="method" value="X-ray"/>
    <property type="resolution" value="1.55 A"/>
    <property type="chains" value="A/B=30-658"/>
</dbReference>
<dbReference type="PDB" id="5AMC">
    <property type="method" value="X-ray"/>
    <property type="resolution" value="1.65 A"/>
    <property type="chains" value="A/B=30-658"/>
</dbReference>
<dbReference type="PDB" id="6EN5">
    <property type="method" value="X-ray"/>
    <property type="resolution" value="1.75 A"/>
    <property type="chains" value="A/B/C/D=30-657"/>
</dbReference>
<dbReference type="PDB" id="6EN6">
    <property type="method" value="X-ray"/>
    <property type="resolution" value="1.80 A"/>
    <property type="chains" value="A/B/C/D=30-657"/>
</dbReference>
<dbReference type="PDB" id="6F9R">
    <property type="method" value="X-ray"/>
    <property type="resolution" value="1.85 A"/>
    <property type="chains" value="A/B=30-657"/>
</dbReference>
<dbReference type="PDB" id="6F9T">
    <property type="method" value="X-ray"/>
    <property type="resolution" value="1.60 A"/>
    <property type="chains" value="A=642-1232"/>
</dbReference>
<dbReference type="PDB" id="6F9U">
    <property type="method" value="X-ray"/>
    <property type="resolution" value="1.90 A"/>
    <property type="chains" value="A=642-1232"/>
</dbReference>
<dbReference type="PDB" id="6F9V">
    <property type="method" value="X-ray"/>
    <property type="resolution" value="1.69 A"/>
    <property type="chains" value="A/B=30-657"/>
</dbReference>
<dbReference type="PDB" id="6H5W">
    <property type="method" value="X-ray"/>
    <property type="resolution" value="1.37 A"/>
    <property type="chains" value="A=642-1232"/>
</dbReference>
<dbReference type="PDB" id="6H5X">
    <property type="method" value="X-ray"/>
    <property type="resolution" value="1.80 A"/>
    <property type="chains" value="A/B=30-657"/>
</dbReference>
<dbReference type="PDB" id="6QS1">
    <property type="method" value="X-ray"/>
    <property type="resolution" value="1.80 A"/>
    <property type="chains" value="A/B=30-657"/>
</dbReference>
<dbReference type="PDB" id="6TT1">
    <property type="method" value="X-ray"/>
    <property type="resolution" value="1.80 A"/>
    <property type="chains" value="A/B=30-657"/>
</dbReference>
<dbReference type="PDB" id="6TT3">
    <property type="method" value="X-ray"/>
    <property type="resolution" value="1.70 A"/>
    <property type="chains" value="A/B=30-657"/>
</dbReference>
<dbReference type="PDB" id="6TT4">
    <property type="method" value="X-ray"/>
    <property type="resolution" value="1.80 A"/>
    <property type="chains" value="A/B=30-657"/>
</dbReference>
<dbReference type="PDB" id="6ZPQ">
    <property type="method" value="X-ray"/>
    <property type="resolution" value="1.85 A"/>
    <property type="chains" value="A/B/C/D=30-657"/>
</dbReference>
<dbReference type="PDB" id="6ZPT">
    <property type="method" value="X-ray"/>
    <property type="resolution" value="2.80 A"/>
    <property type="chains" value="A/B/C/D=30-657"/>
</dbReference>
<dbReference type="PDB" id="6ZPU">
    <property type="method" value="X-ray"/>
    <property type="resolution" value="2.00 A"/>
    <property type="chains" value="A=642-1238"/>
</dbReference>
<dbReference type="PDB" id="7Q24">
    <property type="method" value="X-ray"/>
    <property type="resolution" value="2.00 A"/>
    <property type="chains" value="A/B=30-657"/>
</dbReference>
<dbReference type="PDB" id="7Q25">
    <property type="method" value="X-ray"/>
    <property type="resolution" value="1.60 A"/>
    <property type="chains" value="A/B=30-657"/>
</dbReference>
<dbReference type="PDB" id="7Q26">
    <property type="method" value="X-ray"/>
    <property type="resolution" value="1.70 A"/>
    <property type="chains" value="A/B=30-657"/>
</dbReference>
<dbReference type="PDB" id="7Q27">
    <property type="method" value="X-ray"/>
    <property type="resolution" value="1.50 A"/>
    <property type="chains" value="A=642-1238"/>
</dbReference>
<dbReference type="PDB" id="7Q28">
    <property type="method" value="X-ray"/>
    <property type="resolution" value="1.65 A"/>
    <property type="chains" value="A=642-1238"/>
</dbReference>
<dbReference type="PDB" id="7Q29">
    <property type="method" value="X-ray"/>
    <property type="resolution" value="1.60 A"/>
    <property type="chains" value="A=642-1238"/>
</dbReference>
<dbReference type="PDB" id="7Q3Y">
    <property type="method" value="EM"/>
    <property type="resolution" value="4.34 A"/>
    <property type="chains" value="A=30-1240"/>
</dbReference>
<dbReference type="PDB" id="7Q49">
    <property type="method" value="EM"/>
    <property type="resolution" value="3.72 A"/>
    <property type="chains" value="A=30-1240"/>
</dbReference>
<dbReference type="PDB" id="7Q4C">
    <property type="method" value="EM"/>
    <property type="resolution" value="4.08 A"/>
    <property type="chains" value="A=30-1240"/>
</dbReference>
<dbReference type="PDB" id="7Q4D">
    <property type="method" value="EM"/>
    <property type="resolution" value="3.78 A"/>
    <property type="chains" value="A/B=30-1240"/>
</dbReference>
<dbReference type="PDB" id="7Q4E">
    <property type="method" value="EM"/>
    <property type="resolution" value="3.63 A"/>
    <property type="chains" value="A=30-1240"/>
</dbReference>
<dbReference type="PDB" id="7Z6Z">
    <property type="method" value="X-ray"/>
    <property type="resolution" value="1.75 A"/>
    <property type="chains" value="A/B=30-657"/>
</dbReference>
<dbReference type="PDB" id="7Z70">
    <property type="method" value="X-ray"/>
    <property type="resolution" value="1.85 A"/>
    <property type="chains" value="A=642-1238"/>
</dbReference>
<dbReference type="PDB" id="8QFX">
    <property type="method" value="X-ray"/>
    <property type="resolution" value="1.60 A"/>
    <property type="chains" value="A/B/C/D=30-657"/>
</dbReference>
<dbReference type="PDB" id="8QHL">
    <property type="method" value="X-ray"/>
    <property type="resolution" value="1.90 A"/>
    <property type="chains" value="A/B=30-657"/>
</dbReference>
<dbReference type="PDB" id="9GBL">
    <property type="method" value="X-ray"/>
    <property type="resolution" value="2.40 A"/>
    <property type="chains" value="A=642-1238"/>
</dbReference>
<dbReference type="PDB" id="9GBM">
    <property type="method" value="X-ray"/>
    <property type="resolution" value="1.90 A"/>
    <property type="chains" value="A=642-1238"/>
</dbReference>
<dbReference type="PDB" id="9GBN">
    <property type="method" value="X-ray"/>
    <property type="resolution" value="2.00 A"/>
    <property type="chains" value="A=642-1238"/>
</dbReference>
<dbReference type="PDB" id="9GBO">
    <property type="method" value="X-ray"/>
    <property type="resolution" value="2.00 A"/>
    <property type="chains" value="A=642-1238"/>
</dbReference>
<dbReference type="PDB" id="9GBP">
    <property type="method" value="X-ray"/>
    <property type="resolution" value="2.00 A"/>
    <property type="chains" value="A/B=30-657"/>
</dbReference>
<dbReference type="PDB" id="9GBQ">
    <property type="method" value="X-ray"/>
    <property type="resolution" value="1.90 A"/>
    <property type="chains" value="A/B=30-657"/>
</dbReference>
<dbReference type="PDB" id="9GBR">
    <property type="method" value="X-ray"/>
    <property type="resolution" value="1.90 A"/>
    <property type="chains" value="A/B=30-657"/>
</dbReference>
<dbReference type="PDB" id="9GBS">
    <property type="method" value="X-ray"/>
    <property type="resolution" value="1.90 A"/>
    <property type="chains" value="A/B=30-657"/>
</dbReference>
<dbReference type="PDBsum" id="1O86"/>
<dbReference type="PDBsum" id="1O8A"/>
<dbReference type="PDBsum" id="1UZE"/>
<dbReference type="PDBsum" id="1UZF"/>
<dbReference type="PDBsum" id="2C6F"/>
<dbReference type="PDBsum" id="2C6N"/>
<dbReference type="PDBsum" id="2IUL"/>
<dbReference type="PDBsum" id="2IUX"/>
<dbReference type="PDBsum" id="2OC2"/>
<dbReference type="PDBsum" id="2XY9"/>
<dbReference type="PDBsum" id="2XYD"/>
<dbReference type="PDBsum" id="2YDM"/>
<dbReference type="PDBsum" id="3BKK"/>
<dbReference type="PDBsum" id="3BKL"/>
<dbReference type="PDBsum" id="3L3N"/>
<dbReference type="PDBsum" id="3NXQ"/>
<dbReference type="PDBsum" id="4APH"/>
<dbReference type="PDBsum" id="4APJ"/>
<dbReference type="PDBsum" id="4BXK"/>
<dbReference type="PDBsum" id="4BZR"/>
<dbReference type="PDBsum" id="4BZS"/>
<dbReference type="PDBsum" id="4C2N"/>
<dbReference type="PDBsum" id="4C2O"/>
<dbReference type="PDBsum" id="4C2P"/>
<dbReference type="PDBsum" id="4C2Q"/>
<dbReference type="PDBsum" id="4C2R"/>
<dbReference type="PDBsum" id="4CA5"/>
<dbReference type="PDBsum" id="4CA6"/>
<dbReference type="PDBsum" id="4UFA"/>
<dbReference type="PDBsum" id="4UFB"/>
<dbReference type="PDBsum" id="5AM8"/>
<dbReference type="PDBsum" id="5AM9"/>
<dbReference type="PDBsum" id="5AMA"/>
<dbReference type="PDBsum" id="5AMB"/>
<dbReference type="PDBsum" id="5AMC"/>
<dbReference type="PDBsum" id="6EN5"/>
<dbReference type="PDBsum" id="6EN6"/>
<dbReference type="PDBsum" id="6F9R"/>
<dbReference type="PDBsum" id="6F9T"/>
<dbReference type="PDBsum" id="6F9U"/>
<dbReference type="PDBsum" id="6F9V"/>
<dbReference type="PDBsum" id="6H5W"/>
<dbReference type="PDBsum" id="6H5X"/>
<dbReference type="PDBsum" id="6QS1"/>
<dbReference type="PDBsum" id="6TT1"/>
<dbReference type="PDBsum" id="6TT3"/>
<dbReference type="PDBsum" id="6TT4"/>
<dbReference type="PDBsum" id="6ZPQ"/>
<dbReference type="PDBsum" id="6ZPT"/>
<dbReference type="PDBsum" id="6ZPU"/>
<dbReference type="PDBsum" id="7Q24"/>
<dbReference type="PDBsum" id="7Q25"/>
<dbReference type="PDBsum" id="7Q26"/>
<dbReference type="PDBsum" id="7Q27"/>
<dbReference type="PDBsum" id="7Q28"/>
<dbReference type="PDBsum" id="7Q29"/>
<dbReference type="PDBsum" id="7Q3Y"/>
<dbReference type="PDBsum" id="7Q49"/>
<dbReference type="PDBsum" id="7Q4C"/>
<dbReference type="PDBsum" id="7Q4D"/>
<dbReference type="PDBsum" id="7Q4E"/>
<dbReference type="PDBsum" id="7Z6Z"/>
<dbReference type="PDBsum" id="7Z70"/>
<dbReference type="PDBsum" id="8QFX"/>
<dbReference type="PDBsum" id="8QHL"/>
<dbReference type="PDBsum" id="9GBL"/>
<dbReference type="PDBsum" id="9GBM"/>
<dbReference type="PDBsum" id="9GBN"/>
<dbReference type="PDBsum" id="9GBO"/>
<dbReference type="PDBsum" id="9GBP"/>
<dbReference type="PDBsum" id="9GBQ"/>
<dbReference type="PDBsum" id="9GBR"/>
<dbReference type="PDBsum" id="9GBS"/>
<dbReference type="EMDB" id="EMD-13797"/>
<dbReference type="EMDB" id="EMD-13799"/>
<dbReference type="EMDB" id="EMD-13801"/>
<dbReference type="EMDB" id="EMD-13802"/>
<dbReference type="EMDB" id="EMD-13803"/>
<dbReference type="EMDB" id="EMD-13804"/>
<dbReference type="EMDB" id="EMD-31073"/>
<dbReference type="SMR" id="P12821"/>
<dbReference type="BioGRID" id="108004">
    <property type="interactions" value="17"/>
</dbReference>
<dbReference type="CORUM" id="P12821"/>
<dbReference type="FunCoup" id="P12821">
    <property type="interactions" value="323"/>
</dbReference>
<dbReference type="IntAct" id="P12821">
    <property type="interactions" value="8"/>
</dbReference>
<dbReference type="MINT" id="P12821"/>
<dbReference type="STRING" id="9606.ENSP00000290866"/>
<dbReference type="BindingDB" id="P12821"/>
<dbReference type="ChEMBL" id="CHEMBL1808"/>
<dbReference type="DrugBank" id="DB14511">
    <property type="generic name" value="Acetate"/>
</dbReference>
<dbReference type="DrugBank" id="DB00542">
    <property type="generic name" value="Benazepril"/>
</dbReference>
<dbReference type="DrugBank" id="DB04286">
    <property type="generic name" value="beta-D-Ribopyranose"/>
</dbReference>
<dbReference type="DrugBank" id="DB00616">
    <property type="generic name" value="Candoxatril"/>
</dbReference>
<dbReference type="DrugBank" id="DB01197">
    <property type="generic name" value="Captopril"/>
</dbReference>
<dbReference type="DrugBank" id="DB01340">
    <property type="generic name" value="Cilazapril"/>
</dbReference>
<dbReference type="DrugBank" id="DB15565">
    <property type="generic name" value="Cilazaprilat"/>
</dbReference>
<dbReference type="DrugBank" id="DB13312">
    <property type="generic name" value="Delapril"/>
</dbReference>
<dbReference type="DrugBank" id="DB01089">
    <property type="generic name" value="Deserpidine"/>
</dbReference>
<dbReference type="DrugBank" id="DB00584">
    <property type="generic name" value="Enalapril"/>
</dbReference>
<dbReference type="DrugBank" id="DB09477">
    <property type="generic name" value="Enalaprilat"/>
</dbReference>
<dbReference type="DrugBank" id="DB02032">
    <property type="generic name" value="Epicaptopril"/>
</dbReference>
<dbReference type="DrugBank" id="DB00492">
    <property type="generic name" value="Fosinopril"/>
</dbReference>
<dbReference type="DrugBank" id="DB12923">
    <property type="generic name" value="Gallopamil"/>
</dbReference>
<dbReference type="DrugBank" id="DB00999">
    <property type="generic name" value="Hydrochlorothiazide"/>
</dbReference>
<dbReference type="DrugBank" id="DB06604">
    <property type="generic name" value="Ilepatril"/>
</dbReference>
<dbReference type="DrugBank" id="DB11783">
    <property type="generic name" value="Imidapril"/>
</dbReference>
<dbReference type="DrugBank" id="DB12665">
    <property type="generic name" value="Isoquercetin"/>
</dbReference>
<dbReference type="DrugBank" id="DB00722">
    <property type="generic name" value="Lisinopril"/>
</dbReference>
<dbReference type="DrugBank" id="DB00691">
    <property type="generic name" value="Moexipril"/>
</dbReference>
<dbReference type="DrugBank" id="DB14210">
    <property type="generic name" value="Moexiprilat"/>
</dbReference>
<dbReference type="DrugBank" id="DB03740">
    <property type="generic name" value="N-acetyl-alpha-D-glucosamine"/>
</dbReference>
<dbReference type="DrugBank" id="DB00886">
    <property type="generic name" value="Omapatrilat"/>
</dbReference>
<dbReference type="DrugBank" id="DB00790">
    <property type="generic name" value="Perindopril"/>
</dbReference>
<dbReference type="DrugBank" id="DB00881">
    <property type="generic name" value="Quinapril"/>
</dbReference>
<dbReference type="DrugBank" id="DB00178">
    <property type="generic name" value="Ramipril"/>
</dbReference>
<dbReference type="DrugBank" id="DB01180">
    <property type="generic name" value="Rescinnamine"/>
</dbReference>
<dbReference type="DrugBank" id="DB01348">
    <property type="generic name" value="Spirapril"/>
</dbReference>
<dbReference type="DrugBank" id="DB08836">
    <property type="generic name" value="Temocapril"/>
</dbReference>
<dbReference type="DrugBank" id="DB00519">
    <property type="generic name" value="Trandolapril"/>
</dbReference>
<dbReference type="DrugBank" id="DB13166">
    <property type="generic name" value="Zofenopril"/>
</dbReference>
<dbReference type="DrugCentral" id="P12821"/>
<dbReference type="GuidetoPHARMACOLOGY" id="1613"/>
<dbReference type="MEROPS" id="M02.001"/>
<dbReference type="MEROPS" id="M02.004"/>
<dbReference type="GlyConnect" id="1011">
    <property type="glycosylation" value="24 N-Linked glycans (7 sites)"/>
</dbReference>
<dbReference type="GlyCosmos" id="P12821">
    <property type="glycosylation" value="22 sites, 25 glycans"/>
</dbReference>
<dbReference type="GlyGen" id="P12821">
    <property type="glycosylation" value="21 sites, 113 N-linked glycans (10 sites)"/>
</dbReference>
<dbReference type="iPTMnet" id="P12821"/>
<dbReference type="PhosphoSitePlus" id="P12821"/>
<dbReference type="BioMuta" id="ACE"/>
<dbReference type="DMDM" id="113045"/>
<dbReference type="CPTAC" id="CPTAC-2597"/>
<dbReference type="jPOST" id="P12821"/>
<dbReference type="MassIVE" id="P12821"/>
<dbReference type="PaxDb" id="9606-ENSP00000290866"/>
<dbReference type="PeptideAtlas" id="P12821"/>
<dbReference type="ProteomicsDB" id="52874">
    <molecule id="P12821-1"/>
</dbReference>
<dbReference type="ProteomicsDB" id="52875">
    <molecule id="P12821-2"/>
</dbReference>
<dbReference type="ProteomicsDB" id="52876">
    <molecule id="P12821-3"/>
</dbReference>
<dbReference type="ProteomicsDB" id="52877">
    <molecule id="P12821-4"/>
</dbReference>
<dbReference type="ABCD" id="P12821">
    <property type="antibodies" value="1 sequenced antibody"/>
</dbReference>
<dbReference type="Antibodypedia" id="31288">
    <property type="antibodies" value="911 antibodies from 43 providers"/>
</dbReference>
<dbReference type="DNASU" id="1636"/>
<dbReference type="Ensembl" id="ENST00000290863.10">
    <molecule id="P12821-3"/>
    <property type="protein sequence ID" value="ENSP00000290863.6"/>
    <property type="gene ID" value="ENSG00000159640.17"/>
</dbReference>
<dbReference type="Ensembl" id="ENST00000290866.10">
    <molecule id="P12821-1"/>
    <property type="protein sequence ID" value="ENSP00000290866.4"/>
    <property type="gene ID" value="ENSG00000159640.17"/>
</dbReference>
<dbReference type="Ensembl" id="ENST00000413513.7">
    <molecule id="P12821-4"/>
    <property type="protein sequence ID" value="ENSP00000392247.3"/>
    <property type="gene ID" value="ENSG00000159640.17"/>
</dbReference>
<dbReference type="GeneID" id="1636"/>
<dbReference type="KEGG" id="hsa:1636"/>
<dbReference type="MANE-Select" id="ENST00000290866.10">
    <property type="protein sequence ID" value="ENSP00000290866.4"/>
    <property type="RefSeq nucleotide sequence ID" value="NM_000789.4"/>
    <property type="RefSeq protein sequence ID" value="NP_000780.1"/>
</dbReference>
<dbReference type="UCSC" id="uc002jau.3">
    <molecule id="P12821-1"/>
    <property type="organism name" value="human"/>
</dbReference>
<dbReference type="AGR" id="HGNC:2707"/>
<dbReference type="CTD" id="1636"/>
<dbReference type="DisGeNET" id="1636"/>
<dbReference type="GeneCards" id="ACE"/>
<dbReference type="HGNC" id="HGNC:2707">
    <property type="gene designation" value="ACE"/>
</dbReference>
<dbReference type="HPA" id="ENSG00000159640">
    <property type="expression patterns" value="Tissue enhanced (intestine, testis)"/>
</dbReference>
<dbReference type="MalaCards" id="ACE"/>
<dbReference type="MIM" id="106180">
    <property type="type" value="gene+phenotype"/>
</dbReference>
<dbReference type="MIM" id="267430">
    <property type="type" value="phenotype"/>
</dbReference>
<dbReference type="MIM" id="601367">
    <property type="type" value="phenotype"/>
</dbReference>
<dbReference type="MIM" id="612624">
    <property type="type" value="phenotype"/>
</dbReference>
<dbReference type="MIM" id="614519">
    <property type="type" value="phenotype"/>
</dbReference>
<dbReference type="neXtProt" id="NX_P12821"/>
<dbReference type="NIAGADS" id="ENSG00000159640"/>
<dbReference type="OpenTargets" id="ENSG00000159640"/>
<dbReference type="Orphanet" id="97369">
    <property type="disease" value="Renal tubular dysgenesis of genetic origin"/>
</dbReference>
<dbReference type="PharmGKB" id="PA139"/>
<dbReference type="VEuPathDB" id="HostDB:ENSG00000159640"/>
<dbReference type="eggNOG" id="KOG3690">
    <property type="taxonomic scope" value="Eukaryota"/>
</dbReference>
<dbReference type="GeneTree" id="ENSGT00940000162051"/>
<dbReference type="HOGENOM" id="CLU_014364_3_0_1"/>
<dbReference type="InParanoid" id="P12821"/>
<dbReference type="OMA" id="GMPPEFW"/>
<dbReference type="OrthoDB" id="10029630at2759"/>
<dbReference type="PAN-GO" id="P12821">
    <property type="GO annotations" value="5 GO annotations based on evolutionary models"/>
</dbReference>
<dbReference type="PhylomeDB" id="P12821"/>
<dbReference type="TreeFam" id="TF312861"/>
<dbReference type="BioCyc" id="MetaCyc:HS08412-MONOMER"/>
<dbReference type="BRENDA" id="3.4.15.1">
    <property type="organism ID" value="2681"/>
</dbReference>
<dbReference type="PathwayCommons" id="P12821"/>
<dbReference type="Reactome" id="R-HSA-2022377">
    <property type="pathway name" value="Metabolism of Angiotensinogen to Angiotensins"/>
</dbReference>
<dbReference type="SABIO-RK" id="P12821"/>
<dbReference type="SignaLink" id="P12821"/>
<dbReference type="SIGNOR" id="P12821"/>
<dbReference type="BioGRID-ORCS" id="1636">
    <property type="hits" value="16 hits in 1169 CRISPR screens"/>
</dbReference>
<dbReference type="ChiTaRS" id="ACE">
    <property type="organism name" value="human"/>
</dbReference>
<dbReference type="EvolutionaryTrace" id="P12821"/>
<dbReference type="GeneWiki" id="Angiotensin-converting_enzyme"/>
<dbReference type="GenomeRNAi" id="1636"/>
<dbReference type="Pharos" id="P12821">
    <property type="development level" value="Tclin"/>
</dbReference>
<dbReference type="PRO" id="PR:P12821"/>
<dbReference type="Proteomes" id="UP000005640">
    <property type="component" value="Chromosome 17"/>
</dbReference>
<dbReference type="RNAct" id="P12821">
    <property type="molecule type" value="protein"/>
</dbReference>
<dbReference type="Bgee" id="ENSG00000159640">
    <property type="expression patterns" value="Expressed in ileal mucosa and 109 other cell types or tissues"/>
</dbReference>
<dbReference type="ExpressionAtlas" id="P12821">
    <property type="expression patterns" value="baseline and differential"/>
</dbReference>
<dbReference type="GO" id="GO:0005768">
    <property type="term" value="C:endosome"/>
    <property type="evidence" value="ECO:0000314"/>
    <property type="project" value="BHF-UCL"/>
</dbReference>
<dbReference type="GO" id="GO:0009897">
    <property type="term" value="C:external side of plasma membrane"/>
    <property type="evidence" value="ECO:0000314"/>
    <property type="project" value="BHF-UCL"/>
</dbReference>
<dbReference type="GO" id="GO:0070062">
    <property type="term" value="C:extracellular exosome"/>
    <property type="evidence" value="ECO:0000314"/>
    <property type="project" value="UniProtKB"/>
</dbReference>
<dbReference type="GO" id="GO:0005576">
    <property type="term" value="C:extracellular region"/>
    <property type="evidence" value="ECO:0000304"/>
    <property type="project" value="Reactome"/>
</dbReference>
<dbReference type="GO" id="GO:0005615">
    <property type="term" value="C:extracellular space"/>
    <property type="evidence" value="ECO:0000314"/>
    <property type="project" value="UniProtKB"/>
</dbReference>
<dbReference type="GO" id="GO:0005764">
    <property type="term" value="C:lysosome"/>
    <property type="evidence" value="ECO:0000314"/>
    <property type="project" value="BHF-UCL"/>
</dbReference>
<dbReference type="GO" id="GO:0005886">
    <property type="term" value="C:plasma membrane"/>
    <property type="evidence" value="ECO:0000314"/>
    <property type="project" value="BHF-UCL"/>
</dbReference>
<dbReference type="GO" id="GO:0003779">
    <property type="term" value="F:actin binding"/>
    <property type="evidence" value="ECO:0000314"/>
    <property type="project" value="UniProtKB"/>
</dbReference>
<dbReference type="GO" id="GO:0031711">
    <property type="term" value="F:bradykinin receptor binding"/>
    <property type="evidence" value="ECO:0000353"/>
    <property type="project" value="BHF-UCL"/>
</dbReference>
<dbReference type="GO" id="GO:0005516">
    <property type="term" value="F:calmodulin binding"/>
    <property type="evidence" value="ECO:0007669"/>
    <property type="project" value="UniProtKB-KW"/>
</dbReference>
<dbReference type="GO" id="GO:0031404">
    <property type="term" value="F:chloride ion binding"/>
    <property type="evidence" value="ECO:0000314"/>
    <property type="project" value="UniProtKB"/>
</dbReference>
<dbReference type="GO" id="GO:0004175">
    <property type="term" value="F:endopeptidase activity"/>
    <property type="evidence" value="ECO:0000314"/>
    <property type="project" value="UniProtKB"/>
</dbReference>
<dbReference type="GO" id="GO:0008238">
    <property type="term" value="F:exopeptidase activity"/>
    <property type="evidence" value="ECO:0000314"/>
    <property type="project" value="BHF-UCL"/>
</dbReference>
<dbReference type="GO" id="GO:0004181">
    <property type="term" value="F:metallocarboxypeptidase activity"/>
    <property type="evidence" value="ECO:0007669"/>
    <property type="project" value="Ensembl"/>
</dbReference>
<dbReference type="GO" id="GO:0070573">
    <property type="term" value="F:metallodipeptidase activity"/>
    <property type="evidence" value="ECO:0000314"/>
    <property type="project" value="UniProtKB"/>
</dbReference>
<dbReference type="GO" id="GO:0004222">
    <property type="term" value="F:metalloendopeptidase activity"/>
    <property type="evidence" value="ECO:0000314"/>
    <property type="project" value="UniProtKB"/>
</dbReference>
<dbReference type="GO" id="GO:0008237">
    <property type="term" value="F:metallopeptidase activity"/>
    <property type="evidence" value="ECO:0000314"/>
    <property type="project" value="UniProtKB"/>
</dbReference>
<dbReference type="GO" id="GO:0051019">
    <property type="term" value="F:mitogen-activated protein kinase binding"/>
    <property type="evidence" value="ECO:0000353"/>
    <property type="project" value="BHF-UCL"/>
</dbReference>
<dbReference type="GO" id="GO:0031434">
    <property type="term" value="F:mitogen-activated protein kinase kinase binding"/>
    <property type="evidence" value="ECO:0000353"/>
    <property type="project" value="BHF-UCL"/>
</dbReference>
<dbReference type="GO" id="GO:0008233">
    <property type="term" value="F:peptidase activity"/>
    <property type="evidence" value="ECO:0000314"/>
    <property type="project" value="UniProtKB"/>
</dbReference>
<dbReference type="GO" id="GO:0008241">
    <property type="term" value="F:peptidyl-dipeptidase activity"/>
    <property type="evidence" value="ECO:0000314"/>
    <property type="project" value="UniProtKB"/>
</dbReference>
<dbReference type="GO" id="GO:0008240">
    <property type="term" value="F:tripeptidyl-peptidase activity"/>
    <property type="evidence" value="ECO:0000314"/>
    <property type="project" value="BHF-UCL"/>
</dbReference>
<dbReference type="GO" id="GO:0008270">
    <property type="term" value="F:zinc ion binding"/>
    <property type="evidence" value="ECO:0000314"/>
    <property type="project" value="BHF-UCL"/>
</dbReference>
<dbReference type="GO" id="GO:0050435">
    <property type="term" value="P:amyloid-beta metabolic process"/>
    <property type="evidence" value="ECO:0000314"/>
    <property type="project" value="BHF-UCL"/>
</dbReference>
<dbReference type="GO" id="GO:0002003">
    <property type="term" value="P:angiotensin maturation"/>
    <property type="evidence" value="ECO:0000314"/>
    <property type="project" value="UniProtKB"/>
</dbReference>
<dbReference type="GO" id="GO:0038166">
    <property type="term" value="P:angiotensin-activated signaling pathway"/>
    <property type="evidence" value="ECO:0000250"/>
    <property type="project" value="BHF-UCL"/>
</dbReference>
<dbReference type="GO" id="GO:0002474">
    <property type="term" value="P:antigen processing and presentation of peptide antigen via MHC class I"/>
    <property type="evidence" value="ECO:0000304"/>
    <property type="project" value="BHF-UCL"/>
</dbReference>
<dbReference type="GO" id="GO:0050482">
    <property type="term" value="P:arachidonate secretion"/>
    <property type="evidence" value="ECO:0000314"/>
    <property type="project" value="BHF-UCL"/>
</dbReference>
<dbReference type="GO" id="GO:0097746">
    <property type="term" value="P:blood vessel diameter maintenance"/>
    <property type="evidence" value="ECO:0000305"/>
    <property type="project" value="BHF-UCL"/>
</dbReference>
<dbReference type="GO" id="GO:0001974">
    <property type="term" value="P:blood vessel remodeling"/>
    <property type="evidence" value="ECO:0000305"/>
    <property type="project" value="BHF-UCL"/>
</dbReference>
<dbReference type="GO" id="GO:0010815">
    <property type="term" value="P:bradykinin catabolic process"/>
    <property type="evidence" value="ECO:0000314"/>
    <property type="project" value="UniProtKB"/>
</dbReference>
<dbReference type="GO" id="GO:0071838">
    <property type="term" value="P:cell proliferation in bone marrow"/>
    <property type="evidence" value="ECO:0000250"/>
    <property type="project" value="BHF-UCL"/>
</dbReference>
<dbReference type="GO" id="GO:0060047">
    <property type="term" value="P:heart contraction"/>
    <property type="evidence" value="ECO:0000250"/>
    <property type="project" value="BHF-UCL"/>
</dbReference>
<dbReference type="GO" id="GO:0060218">
    <property type="term" value="P:hematopoietic stem cell differentiation"/>
    <property type="evidence" value="ECO:0000305"/>
    <property type="project" value="BHF-UCL"/>
</dbReference>
<dbReference type="GO" id="GO:0042447">
    <property type="term" value="P:hormone catabolic process"/>
    <property type="evidence" value="ECO:0000314"/>
    <property type="project" value="UniProtKB"/>
</dbReference>
<dbReference type="GO" id="GO:0042445">
    <property type="term" value="P:hormone metabolic process"/>
    <property type="evidence" value="ECO:0000314"/>
    <property type="project" value="UniProtKB"/>
</dbReference>
<dbReference type="GO" id="GO:0001822">
    <property type="term" value="P:kidney development"/>
    <property type="evidence" value="ECO:0000315"/>
    <property type="project" value="BHF-UCL"/>
</dbReference>
<dbReference type="GO" id="GO:0008584">
    <property type="term" value="P:male gonad development"/>
    <property type="evidence" value="ECO:0007669"/>
    <property type="project" value="Ensembl"/>
</dbReference>
<dbReference type="GO" id="GO:0032943">
    <property type="term" value="P:mononuclear cell proliferation"/>
    <property type="evidence" value="ECO:0000305"/>
    <property type="project" value="BHF-UCL"/>
</dbReference>
<dbReference type="GO" id="GO:1903597">
    <property type="term" value="P:negative regulation of gap junction assembly"/>
    <property type="evidence" value="ECO:0000250"/>
    <property type="project" value="BHF-UCL"/>
</dbReference>
<dbReference type="GO" id="GO:0010629">
    <property type="term" value="P:negative regulation of gene expression"/>
    <property type="evidence" value="ECO:0007669"/>
    <property type="project" value="Ensembl"/>
</dbReference>
<dbReference type="GO" id="GO:0002446">
    <property type="term" value="P:neutrophil mediated immunity"/>
    <property type="evidence" value="ECO:0000250"/>
    <property type="project" value="BHF-UCL"/>
</dbReference>
<dbReference type="GO" id="GO:0043171">
    <property type="term" value="P:peptide catabolic process"/>
    <property type="evidence" value="ECO:0000314"/>
    <property type="project" value="BHF-UCL"/>
</dbReference>
<dbReference type="GO" id="GO:0003084">
    <property type="term" value="P:positive regulation of systemic arterial blood pressure"/>
    <property type="evidence" value="ECO:0000318"/>
    <property type="project" value="GO_Central"/>
</dbReference>
<dbReference type="GO" id="GO:0010608">
    <property type="term" value="P:post-transcriptional regulation of gene expression"/>
    <property type="evidence" value="ECO:0007669"/>
    <property type="project" value="Ensembl"/>
</dbReference>
<dbReference type="GO" id="GO:0006508">
    <property type="term" value="P:proteolysis"/>
    <property type="evidence" value="ECO:0000304"/>
    <property type="project" value="UniProtKB"/>
</dbReference>
<dbReference type="GO" id="GO:0060177">
    <property type="term" value="P:regulation of angiotensin metabolic process"/>
    <property type="evidence" value="ECO:0000314"/>
    <property type="project" value="BHF-UCL"/>
</dbReference>
<dbReference type="GO" id="GO:0008217">
    <property type="term" value="P:regulation of blood pressure"/>
    <property type="evidence" value="ECO:0000250"/>
    <property type="project" value="BHF-UCL"/>
</dbReference>
<dbReference type="GO" id="GO:0086091">
    <property type="term" value="P:regulation of heart rate by cardiac conduction"/>
    <property type="evidence" value="ECO:0000250"/>
    <property type="project" value="BHF-UCL"/>
</dbReference>
<dbReference type="GO" id="GO:1902033">
    <property type="term" value="P:regulation of hematopoietic stem cell proliferation"/>
    <property type="evidence" value="ECO:0000250"/>
    <property type="project" value="BHF-UCL"/>
</dbReference>
<dbReference type="GO" id="GO:0002019">
    <property type="term" value="P:regulation of renal output by angiotensin"/>
    <property type="evidence" value="ECO:0000305"/>
    <property type="project" value="BHF-UCL"/>
</dbReference>
<dbReference type="GO" id="GO:0014910">
    <property type="term" value="P:regulation of smooth muscle cell migration"/>
    <property type="evidence" value="ECO:0000250"/>
    <property type="project" value="BHF-UCL"/>
</dbReference>
<dbReference type="GO" id="GO:0048167">
    <property type="term" value="P:regulation of synaptic plasticity"/>
    <property type="evidence" value="ECO:0000250"/>
    <property type="project" value="UniProtKB"/>
</dbReference>
<dbReference type="GO" id="GO:0003081">
    <property type="term" value="P:regulation of systemic arterial blood pressure by renin-angiotensin"/>
    <property type="evidence" value="ECO:0000315"/>
    <property type="project" value="BHF-UCL"/>
</dbReference>
<dbReference type="GO" id="GO:0019229">
    <property type="term" value="P:regulation of vasoconstriction"/>
    <property type="evidence" value="ECO:0000305"/>
    <property type="project" value="UniProtKB"/>
</dbReference>
<dbReference type="GO" id="GO:0007283">
    <property type="term" value="P:spermatogenesis"/>
    <property type="evidence" value="ECO:0000250"/>
    <property type="project" value="BHF-UCL"/>
</dbReference>
<dbReference type="GO" id="GO:0010814">
    <property type="term" value="P:substance P catabolic process"/>
    <property type="evidence" value="ECO:0000314"/>
    <property type="project" value="UniProtKB"/>
</dbReference>
<dbReference type="CDD" id="cd06461">
    <property type="entry name" value="M2_ACE"/>
    <property type="match status" value="2"/>
</dbReference>
<dbReference type="InterPro" id="IPR001548">
    <property type="entry name" value="Peptidase_M2"/>
</dbReference>
<dbReference type="PANTHER" id="PTHR10514">
    <property type="entry name" value="ANGIOTENSIN-CONVERTING ENZYME"/>
    <property type="match status" value="1"/>
</dbReference>
<dbReference type="PANTHER" id="PTHR10514:SF27">
    <property type="entry name" value="ANGIOTENSIN-CONVERTING ENZYME"/>
    <property type="match status" value="1"/>
</dbReference>
<dbReference type="Pfam" id="PF01401">
    <property type="entry name" value="Peptidase_M2"/>
    <property type="match status" value="2"/>
</dbReference>
<dbReference type="PRINTS" id="PR00791">
    <property type="entry name" value="PEPDIPTASEA"/>
</dbReference>
<dbReference type="SUPFAM" id="SSF55486">
    <property type="entry name" value="Metalloproteases ('zincins'), catalytic domain"/>
    <property type="match status" value="2"/>
</dbReference>
<dbReference type="PROSITE" id="PS52011">
    <property type="entry name" value="PEPTIDASE_M2"/>
    <property type="match status" value="2"/>
</dbReference>
<dbReference type="PROSITE" id="PS00142">
    <property type="entry name" value="ZINC_PROTEASE"/>
    <property type="match status" value="2"/>
</dbReference>
<evidence type="ECO:0000250" key="1">
    <source>
        <dbReference type="UniProtKB" id="P09470"/>
    </source>
</evidence>
<evidence type="ECO:0000250" key="2">
    <source>
        <dbReference type="UniProtKB" id="P12822"/>
    </source>
</evidence>
<evidence type="ECO:0000255" key="3"/>
<evidence type="ECO:0000255" key="4">
    <source>
        <dbReference type="PROSITE-ProRule" id="PRU01355"/>
    </source>
</evidence>
<evidence type="ECO:0000269" key="5">
    <source>
    </source>
</evidence>
<evidence type="ECO:0000269" key="6">
    <source>
    </source>
</evidence>
<evidence type="ECO:0000269" key="7">
    <source>
    </source>
</evidence>
<evidence type="ECO:0000269" key="8">
    <source>
    </source>
</evidence>
<evidence type="ECO:0000269" key="9">
    <source>
    </source>
</evidence>
<evidence type="ECO:0000269" key="10">
    <source>
    </source>
</evidence>
<evidence type="ECO:0000269" key="11">
    <source>
    </source>
</evidence>
<evidence type="ECO:0000269" key="12">
    <source>
    </source>
</evidence>
<evidence type="ECO:0000269" key="13">
    <source>
    </source>
</evidence>
<evidence type="ECO:0000269" key="14">
    <source>
    </source>
</evidence>
<evidence type="ECO:0000269" key="15">
    <source>
    </source>
</evidence>
<evidence type="ECO:0000269" key="16">
    <source>
    </source>
</evidence>
<evidence type="ECO:0000269" key="17">
    <source>
    </source>
</evidence>
<evidence type="ECO:0000269" key="18">
    <source>
    </source>
</evidence>
<evidence type="ECO:0000269" key="19">
    <source>
    </source>
</evidence>
<evidence type="ECO:0000269" key="20">
    <source>
    </source>
</evidence>
<evidence type="ECO:0000269" key="21">
    <source>
    </source>
</evidence>
<evidence type="ECO:0000269" key="22">
    <source>
    </source>
</evidence>
<evidence type="ECO:0000269" key="23">
    <source>
    </source>
</evidence>
<evidence type="ECO:0000269" key="24">
    <source>
    </source>
</evidence>
<evidence type="ECO:0000269" key="25">
    <source>
    </source>
</evidence>
<evidence type="ECO:0000269" key="26">
    <source>
    </source>
</evidence>
<evidence type="ECO:0000269" key="27">
    <source>
    </source>
</evidence>
<evidence type="ECO:0000269" key="28">
    <source>
    </source>
</evidence>
<evidence type="ECO:0000269" key="29">
    <source>
    </source>
</evidence>
<evidence type="ECO:0000269" key="30">
    <source>
    </source>
</evidence>
<evidence type="ECO:0000269" key="31">
    <source>
    </source>
</evidence>
<evidence type="ECO:0000269" key="32">
    <source>
    </source>
</evidence>
<evidence type="ECO:0000269" key="33">
    <source>
    </source>
</evidence>
<evidence type="ECO:0000269" key="34">
    <source>
    </source>
</evidence>
<evidence type="ECO:0000269" key="35">
    <source>
    </source>
</evidence>
<evidence type="ECO:0000269" key="36">
    <source>
    </source>
</evidence>
<evidence type="ECO:0000269" key="37">
    <source>
    </source>
</evidence>
<evidence type="ECO:0000269" key="38">
    <source>
    </source>
</evidence>
<evidence type="ECO:0000269" key="39">
    <source>
    </source>
</evidence>
<evidence type="ECO:0000269" key="40">
    <source>
    </source>
</evidence>
<evidence type="ECO:0000269" key="41">
    <source>
    </source>
</evidence>
<evidence type="ECO:0000269" key="42">
    <source>
    </source>
</evidence>
<evidence type="ECO:0000269" key="43">
    <source>
    </source>
</evidence>
<evidence type="ECO:0000269" key="44">
    <source>
    </source>
</evidence>
<evidence type="ECO:0000269" key="45">
    <source>
    </source>
</evidence>
<evidence type="ECO:0000269" key="46">
    <source>
    </source>
</evidence>
<evidence type="ECO:0000269" key="47">
    <source>
    </source>
</evidence>
<evidence type="ECO:0000269" key="48">
    <source>
    </source>
</evidence>
<evidence type="ECO:0000269" key="49">
    <source>
    </source>
</evidence>
<evidence type="ECO:0000269" key="50">
    <source>
    </source>
</evidence>
<evidence type="ECO:0000269" key="51">
    <source>
    </source>
</evidence>
<evidence type="ECO:0000269" key="52">
    <source>
    </source>
</evidence>
<evidence type="ECO:0000269" key="53">
    <source>
    </source>
</evidence>
<evidence type="ECO:0000269" key="54">
    <source>
    </source>
</evidence>
<evidence type="ECO:0000269" key="55">
    <source>
    </source>
</evidence>
<evidence type="ECO:0000269" key="56">
    <source>
    </source>
</evidence>
<evidence type="ECO:0000269" key="57">
    <source>
    </source>
</evidence>
<evidence type="ECO:0000269" key="58">
    <source>
    </source>
</evidence>
<evidence type="ECO:0000269" key="59">
    <source>
    </source>
</evidence>
<evidence type="ECO:0000269" key="60">
    <source>
    </source>
</evidence>
<evidence type="ECO:0000269" key="61">
    <source>
    </source>
</evidence>
<evidence type="ECO:0000269" key="62">
    <source>
    </source>
</evidence>
<evidence type="ECO:0000269" key="63">
    <source>
    </source>
</evidence>
<evidence type="ECO:0000269" key="64">
    <source>
    </source>
</evidence>
<evidence type="ECO:0000269" key="65">
    <source>
    </source>
</evidence>
<evidence type="ECO:0000269" key="66">
    <source>
    </source>
</evidence>
<evidence type="ECO:0000269" key="67">
    <source>
    </source>
</evidence>
<evidence type="ECO:0000269" key="68">
    <source>
    </source>
</evidence>
<evidence type="ECO:0000269" key="69">
    <source>
    </source>
</evidence>
<evidence type="ECO:0000303" key="70">
    <source>
    </source>
</evidence>
<evidence type="ECO:0000303" key="71">
    <source>
    </source>
</evidence>
<evidence type="ECO:0000303" key="72">
    <source>
    </source>
</evidence>
<evidence type="ECO:0000303" key="73">
    <source>
    </source>
</evidence>
<evidence type="ECO:0000303" key="74">
    <source>
    </source>
</evidence>
<evidence type="ECO:0000303" key="75">
    <source>
    </source>
</evidence>
<evidence type="ECO:0000303" key="76">
    <source>
    </source>
</evidence>
<evidence type="ECO:0000303" key="77">
    <source>
    </source>
</evidence>
<evidence type="ECO:0000303" key="78">
    <source>
    </source>
</evidence>
<evidence type="ECO:0000303" key="79">
    <source>
    </source>
</evidence>
<evidence type="ECO:0000305" key="80"/>
<evidence type="ECO:0000305" key="81">
    <source>
    </source>
</evidence>
<evidence type="ECO:0000305" key="82">
    <source>
    </source>
</evidence>
<evidence type="ECO:0000305" key="83">
    <source>
    </source>
</evidence>
<evidence type="ECO:0000305" key="84">
    <source>
    </source>
</evidence>
<evidence type="ECO:0000305" key="85">
    <source>
    </source>
</evidence>
<evidence type="ECO:0000305" key="86">
    <source>
    </source>
</evidence>
<evidence type="ECO:0000305" key="87">
    <source>
    </source>
</evidence>
<evidence type="ECO:0000312" key="88">
    <source>
        <dbReference type="HGNC" id="HGNC:2707"/>
    </source>
</evidence>
<evidence type="ECO:0007744" key="89">
    <source>
        <dbReference type="PDB" id="1O86"/>
    </source>
</evidence>
<evidence type="ECO:0007744" key="90">
    <source>
        <dbReference type="PDB" id="1O8A"/>
    </source>
</evidence>
<evidence type="ECO:0007744" key="91">
    <source>
        <dbReference type="PDB" id="2OC2"/>
    </source>
</evidence>
<evidence type="ECO:0007744" key="92">
    <source>
        <dbReference type="PDB" id="2YDM"/>
    </source>
</evidence>
<evidence type="ECO:0007744" key="93">
    <source>
        <dbReference type="PDB" id="3NXQ"/>
    </source>
</evidence>
<evidence type="ECO:0007744" key="94">
    <source>
        <dbReference type="PDB" id="4APH"/>
    </source>
</evidence>
<evidence type="ECO:0007744" key="95">
    <source>
        <dbReference type="PDB" id="4APJ"/>
    </source>
</evidence>
<evidence type="ECO:0007744" key="96">
    <source>
        <dbReference type="PDB" id="4C2N"/>
    </source>
</evidence>
<evidence type="ECO:0007744" key="97">
    <source>
        <dbReference type="PDB" id="4C2O"/>
    </source>
</evidence>
<evidence type="ECO:0007744" key="98">
    <source>
        <dbReference type="PDB" id="4C2P"/>
    </source>
</evidence>
<evidence type="ECO:0007744" key="99">
    <source>
        <dbReference type="PDB" id="4C2Q"/>
    </source>
</evidence>
<evidence type="ECO:0007744" key="100">
    <source>
        <dbReference type="PDB" id="4C2R"/>
    </source>
</evidence>
<evidence type="ECO:0007744" key="101">
    <source>
        <dbReference type="PDB" id="4UFA"/>
    </source>
</evidence>
<evidence type="ECO:0007744" key="102">
    <source>
        <dbReference type="PDB" id="4UFB"/>
    </source>
</evidence>
<evidence type="ECO:0007829" key="103">
    <source>
        <dbReference type="PDB" id="1UZE"/>
    </source>
</evidence>
<evidence type="ECO:0007829" key="104">
    <source>
        <dbReference type="PDB" id="3BKL"/>
    </source>
</evidence>
<evidence type="ECO:0007829" key="105">
    <source>
        <dbReference type="PDB" id="4APJ"/>
    </source>
</evidence>
<evidence type="ECO:0007829" key="106">
    <source>
        <dbReference type="PDB" id="4BZS"/>
    </source>
</evidence>
<evidence type="ECO:0007829" key="107">
    <source>
        <dbReference type="PDB" id="5AM9"/>
    </source>
</evidence>
<evidence type="ECO:0007829" key="108">
    <source>
        <dbReference type="PDB" id="5AMB"/>
    </source>
</evidence>
<evidence type="ECO:0007829" key="109">
    <source>
        <dbReference type="PDB" id="6F9T"/>
    </source>
</evidence>
<evidence type="ECO:0007829" key="110">
    <source>
        <dbReference type="PDB" id="6H5W"/>
    </source>
</evidence>
<evidence type="ECO:0007829" key="111">
    <source>
        <dbReference type="PDB" id="7Q25"/>
    </source>
</evidence>
<evidence type="ECO:0007829" key="112">
    <source>
        <dbReference type="PDB" id="7Q28"/>
    </source>
</evidence>
<evidence type="ECO:0007829" key="113">
    <source>
        <dbReference type="PDB" id="8QFX"/>
    </source>
</evidence>
<feature type="signal peptide" evidence="48">
    <location>
        <begin position="1"/>
        <end position="29"/>
    </location>
</feature>
<feature type="chain" id="PRO_0000028530" description="Angiotensin-converting enzyme">
    <location>
        <begin position="30"/>
        <end position="1306"/>
    </location>
</feature>
<feature type="chain" id="PRO_0000028531" description="Angiotensin-converting enzyme, soluble form" evidence="81">
    <location>
        <begin position="30"/>
        <end position="1232"/>
    </location>
</feature>
<feature type="topological domain" description="Extracellular" evidence="3">
    <location>
        <begin position="30"/>
        <end position="1256"/>
    </location>
</feature>
<feature type="transmembrane region" description="Helical" evidence="3">
    <location>
        <begin position="1257"/>
        <end position="1277"/>
    </location>
</feature>
<feature type="topological domain" description="Cytoplasmic" evidence="3">
    <location>
        <begin position="1278"/>
        <end position="1306"/>
    </location>
</feature>
<feature type="domain" description="Peptidase M2 1" evidence="4">
    <location>
        <begin position="40"/>
        <end position="624"/>
    </location>
</feature>
<feature type="domain" description="Peptidase M2 2" evidence="4">
    <location>
        <begin position="643"/>
        <end position="1222"/>
    </location>
</feature>
<feature type="region of interest" description="Juxtamembrane stalk" evidence="14">
    <location>
        <begin position="1215"/>
        <end position="1256"/>
    </location>
</feature>
<feature type="active site" description="Proton acceptor 1" evidence="4 20 83 84">
    <location>
        <position position="391"/>
    </location>
</feature>
<feature type="active site" description="Proton donor 1" evidence="4">
    <location>
        <position position="520"/>
    </location>
</feature>
<feature type="active site" description="Proton acceptor 2" evidence="4 20 83 84">
    <location>
        <position position="989"/>
    </location>
</feature>
<feature type="active site" description="Proton donor 2" evidence="4">
    <location>
        <position position="1118"/>
    </location>
</feature>
<feature type="binding site" evidence="4 32">
    <location>
        <position position="231"/>
    </location>
    <ligand>
        <name>chloride</name>
        <dbReference type="ChEBI" id="CHEBI:17996"/>
        <label>1</label>
    </ligand>
</feature>
<feature type="binding site" evidence="4 32 41 50 91 93">
    <location>
        <position position="390"/>
    </location>
    <ligand>
        <name>Zn(2+)</name>
        <dbReference type="ChEBI" id="CHEBI:29105"/>
        <label>1</label>
        <note>catalytic</note>
    </ligand>
</feature>
<feature type="binding site" evidence="4 32 41 50 91 93">
    <location>
        <position position="394"/>
    </location>
    <ligand>
        <name>Zn(2+)</name>
        <dbReference type="ChEBI" id="CHEBI:29105"/>
        <label>1</label>
        <note>catalytic</note>
    </ligand>
</feature>
<feature type="binding site" evidence="4 32 41 50 91 93">
    <location>
        <position position="418"/>
    </location>
    <ligand>
        <name>Zn(2+)</name>
        <dbReference type="ChEBI" id="CHEBI:29105"/>
        <label>1</label>
        <note>catalytic</note>
    </ligand>
</feature>
<feature type="binding site" evidence="4 32">
    <location>
        <position position="529"/>
    </location>
    <ligand>
        <name>chloride</name>
        <dbReference type="ChEBI" id="CHEBI:17996"/>
        <label>1</label>
    </ligand>
</feature>
<feature type="binding site" evidence="4 20">
    <location>
        <position position="791"/>
    </location>
    <ligand>
        <name>chloride</name>
        <dbReference type="ChEBI" id="CHEBI:17996"/>
        <label>2</label>
    </ligand>
</feature>
<feature type="binding site" evidence="4 20">
    <location>
        <position position="829"/>
    </location>
    <ligand>
        <name>chloride</name>
        <dbReference type="ChEBI" id="CHEBI:17996"/>
        <label>3</label>
    </ligand>
</feature>
<feature type="binding site" evidence="4 20 32 44 94">
    <location>
        <position position="988"/>
    </location>
    <ligand>
        <name>Zn(2+)</name>
        <dbReference type="ChEBI" id="CHEBI:29105"/>
        <label>2</label>
        <note>catalytic</note>
    </ligand>
</feature>
<feature type="binding site" evidence="4 20 32 44 94">
    <location>
        <position position="992"/>
    </location>
    <ligand>
        <name>Zn(2+)</name>
        <dbReference type="ChEBI" id="CHEBI:29105"/>
        <label>2</label>
        <note>catalytic</note>
    </ligand>
</feature>
<feature type="binding site" evidence="4 20 32 44 62 94">
    <location>
        <position position="1016"/>
    </location>
    <ligand>
        <name>Zn(2+)</name>
        <dbReference type="ChEBI" id="CHEBI:29105"/>
        <label>2</label>
        <note>catalytic</note>
    </ligand>
</feature>
<feature type="binding site" evidence="4 20">
    <location>
        <position position="1090"/>
    </location>
    <ligand>
        <name>chloride</name>
        <dbReference type="ChEBI" id="CHEBI:17996"/>
        <label>2</label>
    </ligand>
</feature>
<feature type="binding site" evidence="4 20">
    <location>
        <position position="1094"/>
    </location>
    <ligand>
        <name>chloride</name>
        <dbReference type="ChEBI" id="CHEBI:17996"/>
        <label>2</label>
    </ligand>
</feature>
<feature type="binding site" evidence="4 20 82">
    <location>
        <position position="1127"/>
    </location>
    <ligand>
        <name>chloride</name>
        <dbReference type="ChEBI" id="CHEBI:17996"/>
        <label>3</label>
    </ligand>
</feature>
<feature type="site" description="Not glycosylated" evidence="41">
    <location>
        <position position="523"/>
    </location>
</feature>
<feature type="site" description="Cleavage" evidence="58 63">
    <location>
        <begin position="1166"/>
        <end position="1167"/>
    </location>
</feature>
<feature type="site" description="Not glycosylated" evidence="68">
    <location>
        <position position="1225"/>
    </location>
</feature>
<feature type="site" description="Cleavage" evidence="9">
    <location>
        <begin position="1232"/>
        <end position="1233"/>
    </location>
</feature>
<feature type="modified residue" description="Phosphoserine" evidence="18 43">
    <location>
        <position position="1299"/>
    </location>
</feature>
<feature type="glycosylation site" description="N-linked (GlcNAc...) asparagine" evidence="41 87">
    <location>
        <position position="38"/>
    </location>
</feature>
<feature type="glycosylation site" description="N-linked (GlcNAc...) asparagine" evidence="32 41 68">
    <location>
        <position position="54"/>
    </location>
</feature>
<feature type="glycosylation site" description="N-linked (GlcNAc...) asparagine" evidence="32 41 50 93">
    <location>
        <position position="74"/>
    </location>
</feature>
<feature type="glycosylation site" description="N-linked (GlcNAc...) asparagine" evidence="39 41 68">
    <location>
        <position position="111"/>
    </location>
</feature>
<feature type="glycosylation site" description="N-linked (GlcNAc...) asparagine" evidence="32 41 68">
    <location>
        <position position="146"/>
    </location>
</feature>
<feature type="glycosylation site" description="N-linked (GlcNAc...) asparagine" evidence="41">
    <location>
        <position position="160"/>
    </location>
</feature>
<feature type="glycosylation site" description="N-linked (GlcNAc...) asparagine" evidence="32">
    <location>
        <position position="318"/>
    </location>
</feature>
<feature type="glycosylation site" description="N-linked (GlcNAc...) asparagine" evidence="39 41 50 93">
    <location>
        <position position="445"/>
    </location>
</feature>
<feature type="glycosylation site" description="N-linked (GlcNAc...) asparagine" evidence="31 32 41 50 68 93">
    <location>
        <position position="509"/>
    </location>
</feature>
<feature type="glycosylation site" description="N-linked (GlcNAc...) asparagine" evidence="44 94">
    <location>
        <position position="677"/>
    </location>
</feature>
<feature type="glycosylation site" description="N-linked (GlcNAc...) (complex) asparagine" evidence="31 68">
    <location>
        <position position="695"/>
    </location>
</feature>
<feature type="glycosylation site" description="N-linked (GlcNAc...) (complex) asparagine" evidence="31 39 44 68 94">
    <location>
        <position position="714"/>
    </location>
</feature>
<feature type="glycosylation site" description="N-linked (GlcNAc...) asparagine; partial" evidence="68">
    <location>
        <position position="760"/>
    </location>
</feature>
<feature type="glycosylation site" description="N-linked (GlcNAc...) asparagine; partial" evidence="68">
    <location>
        <position position="942"/>
    </location>
</feature>
<feature type="glycosylation site" description="N-linked (GlcNAc...) asparagine; partial" evidence="68">
    <location>
        <position position="1191"/>
    </location>
</feature>
<feature type="disulfide bond" evidence="4 67">
    <location>
        <begin position="157"/>
        <end position="165"/>
    </location>
</feature>
<feature type="disulfide bond" evidence="4">
    <location>
        <begin position="359"/>
        <end position="377"/>
    </location>
</feature>
<feature type="disulfide bond" evidence="4">
    <location>
        <begin position="545"/>
        <end position="557"/>
    </location>
</feature>
<feature type="disulfide bond" evidence="4 67">
    <location>
        <begin position="757"/>
        <end position="763"/>
    </location>
</feature>
<feature type="disulfide bond" evidence="4 67">
    <location>
        <begin position="957"/>
        <end position="975"/>
    </location>
</feature>
<feature type="disulfide bond" evidence="4 67">
    <location>
        <begin position="1143"/>
        <end position="1155"/>
    </location>
</feature>
<feature type="splice variant" id="VSP_054836" description="In isoform 4." evidence="70">
    <original>MGAASGRRGPGLLLPLPLLLLLPPQPALALDPGLQPGNFSADEAGAQLFAQSYNSSAEQVLFQSVAASWAHDTNITAENARRQEEAALLSQEFAEAWGQKAKELYEPIWQNFTDPQLRRIIGAVRTLGSANLPLAKRQQYNALLSNMSRIYSTAKVCLPNKTATCWSLDPDLTNILASSRSYAMLLFAWEGWHNAAGIPLKPLYEDFTALSNEAYKQDGFTDTGAYWRSWYNSPTFEDDLEHLYQQLEPLYLNLHAFVRRALHRRYGDRYINLRGPIPAHLLGDMWAQSWENIYDMVVPFPDKPNLDVTSTMLQQGWNATHMFRVAEEFFTSLELSPMPPEFWEGSMLEKPADGREVVCHASAWDFYNRKDFRIKQCTRVTMDQLSTVHHEMGHIQYYLQYKDLPVSLRRGANPGFHEAIGDVLALSVSTPEHLHKIGLLDRVTNDTESDINYLLKMALEKIAFLPFGYLVDQWRWGVFSGRTPPSRYNFDWWYLRTKYQGICPPVTRNETHFDAGAKFHVPNVTPYIRYFVSFVLQFQFHEALCKEAGYEGPLHQCDIYRSTKAGAKLRKVLQAGSSRPWQEVLKDMVGLDALDAQPLLKYFQPVTQWLQEQNQQNGEVLGWPEYQWHPPLPDNYPEGID</original>
    <variation>MGQGWATAGLPSLLFLLLCYGHPLLVPSQEASQQVTVTHGTSSQATTSSQTTTHQATAHQTSAQSPN</variation>
    <location>
        <begin position="1"/>
        <end position="641"/>
    </location>
</feature>
<feature type="splice variant" id="VSP_035120" description="In isoform Testis-specific." evidence="73 74">
    <location>
        <begin position="1"/>
        <end position="574"/>
    </location>
</feature>
<feature type="splice variant" id="VSP_035121" description="In isoform Testis-specific." evidence="73 74">
    <original>AGSSRPWQEVLKDMVGLDALDAQPLLKYFQPVTQWLQEQNQQNGEVLGWPEYQWHPPLPDNYPEGID</original>
    <variation>MGQGWATAGLPSLLFLLLCYGHPLLVPSQEASQQVTVTHGTSSQATTSSQTTTHQATAHQTSAQSPN</variation>
    <location>
        <begin position="575"/>
        <end position="641"/>
    </location>
</feature>
<feature type="splice variant" id="VSP_054837" description="In isoform 4." evidence="70">
    <location>
        <begin position="1128"/>
        <end position="1168"/>
    </location>
</feature>
<feature type="splice variant" id="VSP_029932" description="In isoform Somatic-2." evidence="79">
    <original>QFHEALCQA</original>
    <variation>HPFSQHTAA</variation>
    <location>
        <begin position="1137"/>
        <end position="1145"/>
    </location>
</feature>
<feature type="splice variant" id="VSP_029933" description="In isoform Somatic-2." evidence="79">
    <location>
        <begin position="1146"/>
        <end position="1306"/>
    </location>
</feature>
<feature type="sequence variant" id="VAR_029139" description="In dbSNP:rs13306087.">
    <original>A</original>
    <variation>T</variation>
    <location>
        <position position="154"/>
    </location>
</feature>
<feature type="sequence variant" id="VAR_029140" description="In dbSNP:rs12720754.">
    <original>A</original>
    <variation>T</variation>
    <location>
        <position position="183"/>
    </location>
</feature>
<feature type="sequence variant" id="VAR_023430" description="In dbSNP:rs3730025.">
    <original>Y</original>
    <variation>C</variation>
    <location>
        <position position="244"/>
    </location>
</feature>
<feature type="sequence variant" id="VAR_054000" description="In dbSNP:rs147670020.">
    <original>R</original>
    <variation>C</variation>
    <location>
        <position position="260"/>
    </location>
</feature>
<feature type="sequence variant" id="VAR_054001" description="In dbSNP:rs4303.">
    <original>R</original>
    <variation>L</variation>
    <location>
        <position position="260"/>
    </location>
</feature>
<feature type="sequence variant" id="VAR_011707" description="In dbSNP:rs4303." evidence="6">
    <original>A</original>
    <variation>S</variation>
    <location>
        <position position="261"/>
    </location>
</feature>
<feature type="sequence variant" id="VAR_074173" description="In dbSNP:rs989500910." evidence="49">
    <original>D</original>
    <variation>N</variation>
    <location>
        <position position="295"/>
    </location>
</feature>
<feature type="sequence variant" id="VAR_023431" description="In dbSNP:rs2229839.">
    <original>P</original>
    <variation>L</variation>
    <location>
        <position position="351"/>
    </location>
</feature>
<feature type="sequence variant" id="VAR_035434" description="In dbSNP:rs56394458." evidence="29">
    <original>G</original>
    <variation>R</variation>
    <location>
        <position position="354"/>
    </location>
</feature>
<feature type="sequence variant" id="VAR_029141" description="In dbSNP:rs13306085.">
    <original>R</original>
    <variation>Q</variation>
    <location>
        <position position="379"/>
    </location>
</feature>
<feature type="sequence variant" id="VAR_029142" description="In dbSNP:rs12720746.">
    <original>V</original>
    <variation>A</variation>
    <location>
        <position position="524"/>
    </location>
</feature>
<feature type="sequence variant" id="VAR_011708" description="In dbSNP:rs4314." evidence="6">
    <original>R</original>
    <variation>W</variation>
    <location>
        <position position="561"/>
    </location>
</feature>
<feature type="sequence variant" id="VAR_020053" description="In dbSNP:rs12709426.">
    <original>D</original>
    <variation>G</variation>
    <location>
        <position position="592"/>
    </location>
</feature>
<feature type="sequence variant" id="VAR_034602" description="In dbSNP:rs13306091.">
    <original>M</original>
    <variation>T</variation>
    <location>
        <position position="828"/>
    </location>
</feature>
<feature type="sequence variant" id="VAR_023432" description="In dbSNP:rs3730043.">
    <original>T</original>
    <variation>M</variation>
    <location>
        <position position="916"/>
    </location>
</feature>
<feature type="sequence variant" id="VAR_014189" description="In dbSNP:rs4976." evidence="8">
    <original>I</original>
    <variation>T</variation>
    <location>
        <position position="1018"/>
    </location>
</feature>
<feature type="sequence variant" id="VAR_014190" description="In dbSNP:rs4977." evidence="8">
    <original>F</original>
    <variation>V</variation>
    <location>
        <position position="1051"/>
    </location>
</feature>
<feature type="sequence variant" id="VAR_023433" description="In dbSNP:rs12709442.">
    <original>T</original>
    <variation>M</variation>
    <location>
        <position position="1187"/>
    </location>
</feature>
<feature type="sequence variant" id="VAR_023434" description="No effect on activity; increases secretion; rate of solubilization is 2.5-fold higher than wild-type; dbSNP:rs121912703." evidence="13 16 23">
    <original>P</original>
    <variation>L</variation>
    <location>
        <position position="1228"/>
    </location>
</feature>
<feature type="sequence variant" id="VAR_014191" description="In dbSNP:rs4980." evidence="8">
    <original>R</original>
    <variation>Q</variation>
    <location>
        <position position="1279"/>
    </location>
</feature>
<feature type="sequence variant" id="VAR_011709" description="In dbSNP:rs4364." evidence="6 8">
    <original>R</original>
    <variation>S</variation>
    <location>
        <position position="1286"/>
    </location>
</feature>
<feature type="sequence variant" id="VAR_014192" description="In dbSNP:rs4981." evidence="8">
    <original>Q</original>
    <variation>P</variation>
    <location>
        <position position="1296"/>
    </location>
</feature>
<feature type="mutagenesis site" description="In Ndom123456 mutant; abolished dipeptidyl carboxypeptidase activity; when associated with D-445 and D-509. In Ndom1234569 mutant; does not affect dipeptidyl carboxypeptidase activity; when associated with D-445." evidence="41">
    <original>N</original>
    <variation>D</variation>
    <location>
        <position position="318"/>
    </location>
</feature>
<feature type="mutagenesis site" description="Abolished dipeptidyl carboxypeptidase activity; when associated with 988-K--K-992. Abolished N-terminal active sites, leading to impaired ability to degrade the hemoregulatory peptide N-acetyl-SDKP (AcSDKP). In contrast, does not affect cleavage of other substrates, such as Cholecystokinin-5." evidence="7 22 38 60 61 62">
    <original>HEMGH</original>
    <variation>KEMGK</variation>
    <location>
        <begin position="390"/>
        <end position="394"/>
    </location>
</feature>
<feature type="mutagenesis site" description="Abolished peptidase activity, leading to increased levels of amyloid-beta; when associated with D-989." evidence="30 40">
    <original>E</original>
    <variation>D</variation>
    <location>
        <position position="391"/>
    </location>
</feature>
<feature type="mutagenesis site" description="In Ndom123456 mutant; abolished dipeptidyl carboxypeptidase activity; when associated with D-318 and D-445. In Ndom1234569 mutant; does not affect dipeptidyl carboxypeptidase activity; when associated with D-318." evidence="41">
    <original>N</original>
    <variation>D</variation>
    <location>
        <position position="445"/>
    </location>
</feature>
<feature type="mutagenesis site" description="In Ndom123456 mutant; abolished dipeptidyl carboxypeptidase activity; when associated with D-318 and D-445." evidence="41">
    <original>N</original>
    <variation>D</variation>
    <location>
        <position position="509"/>
    </location>
</feature>
<feature type="mutagenesis site" description="Abolished dependence to chloride, leading to reduced peptidyl dipeptidase activity." evidence="15">
    <original>R</original>
    <variation>Q</variation>
    <location>
        <position position="529"/>
    </location>
</feature>
<feature type="mutagenesis site" description="Abolished dipeptidyl carboxypeptidase activity; when associated with 390-K--K-394. Abolishes the second active site, preventing maturation of Cholecystokinin-5." evidence="7 22 38 60">
    <original>HEMGH</original>
    <variation>KEMGK</variation>
    <location>
        <begin position="988"/>
        <end position="992"/>
    </location>
</feature>
<feature type="mutagenesis site" description="Abolished peptidase activity, leading to increased levels of amyloid-beta; when associated with D-391." evidence="30 40">
    <original>E</original>
    <variation>D</variation>
    <location>
        <position position="989"/>
    </location>
</feature>
<feature type="mutagenesis site" description="Strongly decreased dipeptidyl carboxypeptidase activity; when associated with 390-K--K-394." evidence="62">
    <original>E</original>
    <variation>D</variation>
    <location>
        <position position="1016"/>
    </location>
</feature>
<feature type="mutagenesis site" description="Abolished dipeptidyl carboxypeptidase activity; when associated with 390-K--K-394." evidence="62">
    <original>E</original>
    <variation>V</variation>
    <location>
        <position position="1016"/>
    </location>
</feature>
<feature type="mutagenesis site" description="Decreased dipeptidyl carboxypeptidase activity; when associated with 390-K--K-394." evidence="62">
    <original>D</original>
    <variation>E</variation>
    <variation>A</variation>
    <location>
        <position position="1020"/>
    </location>
</feature>
<feature type="mutagenesis site" description="Decreased ability to cleave substance P and bradykinin. Reduced binding to captopril inhibitor." evidence="27">
    <original>K</original>
    <variation>A</variation>
    <location>
        <position position="1116"/>
    </location>
</feature>
<feature type="mutagenesis site" description="Decreased ability to cleave substance P and captopril inhibitor." evidence="27">
    <original>Y</original>
    <variation>F</variation>
    <location>
        <position position="1125"/>
    </location>
</feature>
<feature type="mutagenesis site" description="Abolished dependence to chloride, leading to reduced peptidyl dipeptidase activity." evidence="15">
    <original>R</original>
    <variation>Q</variation>
    <location>
        <position position="1127"/>
    </location>
</feature>
<feature type="mutagenesis site" description="Does not prevent cleavage and secretion of the soluble form, suggesting that processing can take place at different sites." evidence="63">
    <original>R</original>
    <variation>Q</variation>
    <location>
        <position position="1166"/>
    </location>
</feature>
<feature type="mutagenesis site" description="Increased cleavage and secretion of the soluble form by generating a new cleavage site." evidence="14">
    <original>N</original>
    <variation>Q</variation>
    <location>
        <position position="1229"/>
    </location>
</feature>
<feature type="mutagenesis site" description="Abolishes phosphorylation and decreases membrane retention." evidence="18 43">
    <original>S</original>
    <variation>A</variation>
    <location>
        <position position="1299"/>
    </location>
</feature>
<feature type="sequence conflict" description="In Ref. 9; AA sequence." evidence="80" ref="9">
    <original>Q</original>
    <variation>E</variation>
    <location>
        <position position="35"/>
    </location>
</feature>
<feature type="sequence conflict" description="In Ref. 9; AA sequence." evidence="80" ref="9">
    <original>D</original>
    <variation>R</variation>
    <location>
        <position position="42"/>
    </location>
</feature>
<feature type="helix" evidence="108">
    <location>
        <begin position="32"/>
        <end position="34"/>
    </location>
</feature>
<feature type="helix" evidence="108">
    <location>
        <begin position="43"/>
        <end position="72"/>
    </location>
</feature>
<feature type="helix" evidence="108">
    <location>
        <begin position="77"/>
        <end position="105"/>
    </location>
</feature>
<feature type="turn" evidence="108">
    <location>
        <begin position="106"/>
        <end position="108"/>
    </location>
</feature>
<feature type="helix" evidence="108">
    <location>
        <begin position="109"/>
        <end position="111"/>
    </location>
</feature>
<feature type="helix" evidence="108">
    <location>
        <begin position="115"/>
        <end position="124"/>
    </location>
</feature>
<feature type="helix" evidence="108">
    <location>
        <begin position="128"/>
        <end position="131"/>
    </location>
</feature>
<feature type="helix" evidence="108">
    <location>
        <begin position="134"/>
        <end position="153"/>
    </location>
</feature>
<feature type="strand" evidence="108">
    <location>
        <begin position="155"/>
        <end position="157"/>
    </location>
</feature>
<feature type="strand" evidence="106">
    <location>
        <begin position="159"/>
        <end position="161"/>
    </location>
</feature>
<feature type="strand" evidence="108">
    <location>
        <begin position="165"/>
        <end position="167"/>
    </location>
</feature>
<feature type="turn" evidence="108">
    <location>
        <begin position="168"/>
        <end position="170"/>
    </location>
</feature>
<feature type="helix" evidence="108">
    <location>
        <begin position="171"/>
        <end position="178"/>
    </location>
</feature>
<feature type="helix" evidence="108">
    <location>
        <begin position="182"/>
        <end position="216"/>
    </location>
</feature>
<feature type="turn" evidence="108">
    <location>
        <begin position="217"/>
        <end position="219"/>
    </location>
</feature>
<feature type="helix" evidence="108">
    <location>
        <begin position="223"/>
        <end position="229"/>
    </location>
</feature>
<feature type="helix" evidence="108">
    <location>
        <begin position="236"/>
        <end position="266"/>
    </location>
</feature>
<feature type="turn" evidence="108">
    <location>
        <begin position="268"/>
        <end position="270"/>
    </location>
</feature>
<feature type="strand" evidence="108">
    <location>
        <begin position="281"/>
        <end position="284"/>
    </location>
</feature>
<feature type="helix" evidence="108">
    <location>
        <begin position="291"/>
        <end position="293"/>
    </location>
</feature>
<feature type="helix" evidence="108">
    <location>
        <begin position="294"/>
        <end position="297"/>
    </location>
</feature>
<feature type="helix" evidence="108">
    <location>
        <begin position="309"/>
        <end position="314"/>
    </location>
</feature>
<feature type="helix" evidence="108">
    <location>
        <begin position="319"/>
        <end position="332"/>
    </location>
</feature>
<feature type="helix" evidence="108">
    <location>
        <begin position="340"/>
        <end position="345"/>
    </location>
</feature>
<feature type="strand" evidence="113">
    <location>
        <begin position="352"/>
        <end position="354"/>
    </location>
</feature>
<feature type="strand" evidence="108">
    <location>
        <begin position="362"/>
        <end position="365"/>
    </location>
</feature>
<feature type="strand" evidence="108">
    <location>
        <begin position="367"/>
        <end position="370"/>
    </location>
</feature>
<feature type="strand" evidence="108">
    <location>
        <begin position="372"/>
        <end position="375"/>
    </location>
</feature>
<feature type="helix" evidence="108">
    <location>
        <begin position="382"/>
        <end position="401"/>
    </location>
</feature>
<feature type="helix" evidence="108">
    <location>
        <begin position="406"/>
        <end position="408"/>
    </location>
</feature>
<feature type="helix" evidence="108">
    <location>
        <begin position="414"/>
        <end position="428"/>
    </location>
</feature>
<feature type="helix" evidence="108">
    <location>
        <begin position="431"/>
        <end position="436"/>
    </location>
</feature>
<feature type="helix" evidence="108">
    <location>
        <begin position="447"/>
        <end position="461"/>
    </location>
</feature>
<feature type="helix" evidence="108">
    <location>
        <begin position="464"/>
        <end position="479"/>
    </location>
</feature>
<feature type="strand" evidence="113">
    <location>
        <begin position="481"/>
        <end position="483"/>
    </location>
</feature>
<feature type="helix" evidence="108">
    <location>
        <begin position="485"/>
        <end position="487"/>
    </location>
</feature>
<feature type="helix" evidence="108">
    <location>
        <begin position="488"/>
        <end position="500"/>
    </location>
</feature>
<feature type="helix" evidence="108">
    <location>
        <begin position="514"/>
        <end position="517"/>
    </location>
</feature>
<feature type="turn" evidence="108">
    <location>
        <begin position="519"/>
        <end position="524"/>
    </location>
</feature>
<feature type="helix" evidence="108">
    <location>
        <begin position="528"/>
        <end position="547"/>
    </location>
</feature>
<feature type="helix" evidence="108">
    <location>
        <begin position="554"/>
        <end position="556"/>
    </location>
</feature>
<feature type="helix" evidence="108">
    <location>
        <begin position="563"/>
        <end position="575"/>
    </location>
</feature>
<feature type="helix" evidence="108">
    <location>
        <begin position="581"/>
        <end position="589"/>
    </location>
</feature>
<feature type="helix" evidence="108">
    <location>
        <begin position="597"/>
        <end position="617"/>
    </location>
</feature>
<feature type="turn" evidence="111">
    <location>
        <begin position="634"/>
        <end position="637"/>
    </location>
</feature>
<feature type="helix" evidence="111">
    <location>
        <begin position="638"/>
        <end position="640"/>
    </location>
</feature>
<feature type="helix" evidence="107">
    <location>
        <begin position="641"/>
        <end position="643"/>
    </location>
</feature>
<feature type="helix" evidence="110">
    <location>
        <begin position="646"/>
        <end position="675"/>
    </location>
</feature>
<feature type="helix" evidence="110">
    <location>
        <begin position="680"/>
        <end position="704"/>
    </location>
</feature>
<feature type="helix" evidence="110">
    <location>
        <begin position="709"/>
        <end position="711"/>
    </location>
</feature>
<feature type="helix" evidence="110">
    <location>
        <begin position="715"/>
        <end position="724"/>
    </location>
</feature>
<feature type="helix" evidence="110">
    <location>
        <begin position="728"/>
        <end position="731"/>
    </location>
</feature>
<feature type="helix" evidence="110">
    <location>
        <begin position="734"/>
        <end position="753"/>
    </location>
</feature>
<feature type="strand" evidence="110">
    <location>
        <begin position="755"/>
        <end position="757"/>
    </location>
</feature>
<feature type="strand" evidence="103">
    <location>
        <begin position="759"/>
        <end position="761"/>
    </location>
</feature>
<feature type="strand" evidence="110">
    <location>
        <begin position="763"/>
        <end position="765"/>
    </location>
</feature>
<feature type="turn" evidence="110">
    <location>
        <begin position="766"/>
        <end position="768"/>
    </location>
</feature>
<feature type="helix" evidence="110">
    <location>
        <begin position="769"/>
        <end position="776"/>
    </location>
</feature>
<feature type="helix" evidence="110">
    <location>
        <begin position="780"/>
        <end position="793"/>
    </location>
</feature>
<feature type="helix" evidence="110">
    <location>
        <begin position="795"/>
        <end position="798"/>
    </location>
</feature>
<feature type="turn" evidence="110">
    <location>
        <begin position="799"/>
        <end position="801"/>
    </location>
</feature>
<feature type="helix" evidence="110">
    <location>
        <begin position="802"/>
        <end position="815"/>
    </location>
</feature>
<feature type="helix" evidence="110">
    <location>
        <begin position="821"/>
        <end position="827"/>
    </location>
</feature>
<feature type="helix" evidence="110">
    <location>
        <begin position="834"/>
        <end position="844"/>
    </location>
</feature>
<feature type="helix" evidence="110">
    <location>
        <begin position="846"/>
        <end position="864"/>
    </location>
</feature>
<feature type="helix" evidence="110">
    <location>
        <begin position="866"/>
        <end position="868"/>
    </location>
</feature>
<feature type="strand" evidence="110">
    <location>
        <begin position="879"/>
        <end position="882"/>
    </location>
</feature>
<feature type="helix" evidence="110">
    <location>
        <begin position="889"/>
        <end position="891"/>
    </location>
</feature>
<feature type="helix" evidence="110">
    <location>
        <begin position="892"/>
        <end position="895"/>
    </location>
</feature>
<feature type="helix" evidence="110">
    <location>
        <begin position="906"/>
        <end position="912"/>
    </location>
</feature>
<feature type="helix" evidence="110">
    <location>
        <begin position="917"/>
        <end position="930"/>
    </location>
</feature>
<feature type="helix" evidence="110">
    <location>
        <begin position="938"/>
        <end position="943"/>
    </location>
</feature>
<feature type="strand" evidence="105">
    <location>
        <begin position="945"/>
        <end position="947"/>
    </location>
</feature>
<feature type="strand" evidence="110">
    <location>
        <begin position="950"/>
        <end position="952"/>
    </location>
</feature>
<feature type="strand" evidence="110">
    <location>
        <begin position="960"/>
        <end position="963"/>
    </location>
</feature>
<feature type="strand" evidence="110">
    <location>
        <begin position="965"/>
        <end position="968"/>
    </location>
</feature>
<feature type="strand" evidence="110">
    <location>
        <begin position="970"/>
        <end position="973"/>
    </location>
</feature>
<feature type="helix" evidence="110">
    <location>
        <begin position="980"/>
        <end position="998"/>
    </location>
</feature>
<feature type="turn" evidence="110">
    <location>
        <begin position="999"/>
        <end position="1001"/>
    </location>
</feature>
<feature type="helix" evidence="110">
    <location>
        <begin position="1004"/>
        <end position="1006"/>
    </location>
</feature>
<feature type="helix" evidence="110">
    <location>
        <begin position="1012"/>
        <end position="1026"/>
    </location>
</feature>
<feature type="helix" evidence="110">
    <location>
        <begin position="1029"/>
        <end position="1034"/>
    </location>
</feature>
<feature type="strand" evidence="112">
    <location>
        <begin position="1037"/>
        <end position="1040"/>
    </location>
</feature>
<feature type="helix" evidence="110">
    <location>
        <begin position="1045"/>
        <end position="1059"/>
    </location>
</feature>
<feature type="helix" evidence="110">
    <location>
        <begin position="1062"/>
        <end position="1077"/>
    </location>
</feature>
<feature type="turn" evidence="110">
    <location>
        <begin position="1083"/>
        <end position="1085"/>
    </location>
</feature>
<feature type="helix" evidence="110">
    <location>
        <begin position="1086"/>
        <end position="1098"/>
    </location>
</feature>
<feature type="helix" evidence="110">
    <location>
        <begin position="1112"/>
        <end position="1115"/>
    </location>
</feature>
<feature type="turn" evidence="110">
    <location>
        <begin position="1117"/>
        <end position="1122"/>
    </location>
</feature>
<feature type="helix" evidence="110">
    <location>
        <begin position="1126"/>
        <end position="1145"/>
    </location>
</feature>
<feature type="helix" evidence="110">
    <location>
        <begin position="1152"/>
        <end position="1154"/>
    </location>
</feature>
<feature type="helix" evidence="110">
    <location>
        <begin position="1161"/>
        <end position="1171"/>
    </location>
</feature>
<feature type="turn" evidence="110">
    <location>
        <begin position="1172"/>
        <end position="1175"/>
    </location>
</feature>
<feature type="helix" evidence="110">
    <location>
        <begin position="1179"/>
        <end position="1187"/>
    </location>
</feature>
<feature type="strand" evidence="104">
    <location>
        <begin position="1188"/>
        <end position="1191"/>
    </location>
</feature>
<feature type="helix" evidence="110">
    <location>
        <begin position="1195"/>
        <end position="1215"/>
    </location>
</feature>
<feature type="turn" evidence="109">
    <location>
        <begin position="1222"/>
        <end position="1225"/>
    </location>
</feature>
<feature type="binding site" evidence="45 96 98 99 100">
    <location sequence="P12821-3">
        <position position="414"/>
    </location>
    <ligand>
        <name>Zn(2+)</name>
        <dbReference type="ChEBI" id="CHEBI:29105"/>
        <note>catalytic</note>
    </ligand>
</feature>
<feature type="binding site" evidence="45 96 98 99 100">
    <location sequence="P12821-3">
        <position position="418"/>
    </location>
    <ligand>
        <name>Zn(2+)</name>
        <dbReference type="ChEBI" id="CHEBI:29105"/>
        <note>catalytic</note>
    </ligand>
</feature>
<feature type="binding site" evidence="45 96 98 99 100">
    <location sequence="P12821-3">
        <position position="442"/>
    </location>
    <ligand>
        <name>Zn(2+)</name>
        <dbReference type="ChEBI" id="CHEBI:29105"/>
        <note>catalytic</note>
    </ligand>
</feature>
<feature type="glycosylation site" description="N-linked (GlcNAc...) asparagine" evidence="42 45 66 97">
    <location sequence="P12821-3">
        <position position="103"/>
    </location>
</feature>
<feature type="glycosylation site" description="N-linked (GlcNAc...) asparagine" evidence="66">
    <location sequence="P12821-3">
        <position position="121"/>
    </location>
</feature>
<feature type="glycosylation site" description="N-linked (GlcNAc...) asparagine" evidence="42 45 66 97">
    <location sequence="P12821-3">
        <position position="140"/>
    </location>
</feature>
<feature type="glycosylation site" description="N-linked (GlcNAc...) asparagine" evidence="66">
    <location sequence="P12821-3">
        <position position="368"/>
    </location>
</feature>
<feature type="glycosylation site" description="N-linked (GlcNAc...) asparagine" evidence="66">
    <location sequence="P12821-3">
        <position position="617"/>
    </location>
</feature>
<feature type="sequence variant" id="VAR_082898" description="In dbSNP:rs4317." evidence="80">
    <original>S</original>
    <variation>P</variation>
    <location sequence="P12821-3">
        <position position="32"/>
    </location>
</feature>
<feature type="sequence variant" id="VAR_082899" description="In dbSNP:rs4318." evidence="80">
    <original>S</original>
    <variation>G</variation>
    <location sequence="P12821-3">
        <position position="49"/>
    </location>
</feature>
<feature type="mutagenesis site" description="In ACE(t)g0 mutant; abolished N-glycosylation leading to impaired stability and degradation; when associated with D-121, D-140, D-368 and D-617. In ACE(t)g2 mutant; decreased N-glycosylation without affecting stability; when associated with D-140, D-368 and D-617. In ACE(t)g3 mutant; decreased N-glycosylation leading to impaired stability and degradation; when associated with D-121, D-368 and D-617." evidence="66">
    <original>N</original>
    <variation>D</variation>
    <location sequence="P12821-3">
        <position position="103"/>
    </location>
</feature>
<feature type="mutagenesis site" description="In ACE(t)g0 mutant; abolished N-glycosylation leading to impaired stability and degradation; when associated with D-103, D-140, D-368 and D-617. In ACE(t)g1 mutant; decreased N-glycosylation without affecting stability; when associated with D-140, D-368 and D-617. In ACE(t)g3 mutant; decreased N-glycosylation leading to impaired stability and degradation; when associated with D-103, D-368 and D-617." evidence="66">
    <original>N</original>
    <variation>D</variation>
    <location sequence="P12821-3">
        <position position="121"/>
    </location>
</feature>
<feature type="mutagenesis site" description="In ACE(t)g0 mutant; abolished N-glycosylation leading to impaired stability and degradation; when associated with D-103, D-121, D-368 and D-617. In ACE(t)g1 mutant; decreased N-glycosylation without affecting stability; when associated with D-121, D-368 and D-617. In ACE(t)g2 mutant; decreased N-glycosylation without affecting stability; when associated with D-103, D-368 and D-617." evidence="66">
    <original>N</original>
    <variation>D</variation>
    <location sequence="P12821-3">
        <position position="140"/>
    </location>
</feature>
<feature type="mutagenesis site" description="In ACE(t)g0 mutant; abolished N-glycosylation leading to impaired stability and degradation; when associated with D-103, D-121, D-140 and D-617. In ACE(t)g1 mutant; decreased N-glycosylation without affecting stability; when associated with D-121, D-140 and D-617. In ACE(t)g2 mutant; decreased N-glycosylation without affecting stability; when associated with D-103, D-140 and D-617. In ACE(t)g3 mutant; decreased N-glycosylation leading to impaired stability and degradation; when associated with D-103, D-121 and D-617." evidence="66">
    <original>N</original>
    <variation>D</variation>
    <location sequence="P12821-3">
        <position position="368"/>
    </location>
</feature>
<feature type="mutagenesis site" description="Abolished binding to chloride ion." evidence="45">
    <original>R</original>
    <variation>K</variation>
    <variation>Q</variation>
    <location sequence="P12821-3">
        <position position="553"/>
    </location>
</feature>
<feature type="mutagenesis site" description="In ACE(t)g0 mutant; abolished N-glycosylation leading to impaired stability and degradation; when associated with D-103, D-121, D-140 and D-368. In ACE(t)g1 mutant; decreased N-glycosylation without affecting stability; when associated with D-121, D-140 and D-368. In ACE(t)g2 mutant; decreased N-glycosylation without affecting stability; when associated with D-103, D-140 and D-368. In ACE(t)g3 mutant; decreased N-glycosylation leading to impaired stability and degradation; when associated with D-103, D-121 and D-368." evidence="66">
    <original>N</original>
    <variation>D</variation>
    <location sequence="P12821-3">
        <position position="617"/>
    </location>
</feature>
<gene>
    <name evidence="75 88" type="primary">ACE</name>
    <name type="synonym">DCP</name>
    <name type="synonym">DCP1</name>
</gene>
<keyword id="KW-0002">3D-structure</keyword>
<keyword id="KW-0877">Alternative promoter usage</keyword>
<keyword id="KW-0025">Alternative splicing</keyword>
<keyword id="KW-0112">Calmodulin-binding</keyword>
<keyword id="KW-0121">Carboxypeptidase</keyword>
<keyword id="KW-1003">Cell membrane</keyword>
<keyword id="KW-0963">Cytoplasm</keyword>
<keyword id="KW-0903">Direct protein sequencing</keyword>
<keyword id="KW-1015">Disulfide bond</keyword>
<keyword id="KW-0325">Glycoprotein</keyword>
<keyword id="KW-0378">Hydrolase</keyword>
<keyword id="KW-0472">Membrane</keyword>
<keyword id="KW-0479">Metal-binding</keyword>
<keyword id="KW-0482">Metalloprotease</keyword>
<keyword id="KW-0597">Phosphoprotein</keyword>
<keyword id="KW-0645">Protease</keyword>
<keyword id="KW-1267">Proteomics identification</keyword>
<keyword id="KW-1185">Reference proteome</keyword>
<keyword id="KW-0677">Repeat</keyword>
<keyword id="KW-0964">Secreted</keyword>
<keyword id="KW-0732">Signal</keyword>
<keyword id="KW-0812">Transmembrane</keyword>
<keyword id="KW-1133">Transmembrane helix</keyword>
<keyword id="KW-0862">Zinc</keyword>
<sequence length="1306" mass="149715">MGAASGRRGPGLLLPLPLLLLLPPQPALALDPGLQPGNFSADEAGAQLFAQSYNSSAEQVLFQSVAASWAHDTNITAENARRQEEAALLSQEFAEAWGQKAKELYEPIWQNFTDPQLRRIIGAVRTLGSANLPLAKRQQYNALLSNMSRIYSTAKVCLPNKTATCWSLDPDLTNILASSRSYAMLLFAWEGWHNAAGIPLKPLYEDFTALSNEAYKQDGFTDTGAYWRSWYNSPTFEDDLEHLYQQLEPLYLNLHAFVRRALHRRYGDRYINLRGPIPAHLLGDMWAQSWENIYDMVVPFPDKPNLDVTSTMLQQGWNATHMFRVAEEFFTSLELSPMPPEFWEGSMLEKPADGREVVCHASAWDFYNRKDFRIKQCTRVTMDQLSTVHHEMGHIQYYLQYKDLPVSLRRGANPGFHEAIGDVLALSVSTPEHLHKIGLLDRVTNDTESDINYLLKMALEKIAFLPFGYLVDQWRWGVFSGRTPPSRYNFDWWYLRTKYQGICPPVTRNETHFDAGAKFHVPNVTPYIRYFVSFVLQFQFHEALCKEAGYEGPLHQCDIYRSTKAGAKLRKVLQAGSSRPWQEVLKDMVGLDALDAQPLLKYFQPVTQWLQEQNQQNGEVLGWPEYQWHPPLPDNYPEGIDLVTDEAEASKFVEEYDRTSQVVWNEYAEANWNYNTNITTETSKILLQKNMQIANHTLKYGTQARKFDVNQLQNTTIKRIIKKVQDLERAALPAQELEEYNKILLDMETTYSVATVCHPNGSCLQLEPDLTNVMATSRKYEDLLWAWEGWRDKAGRAILQFYPKYVELINQAARLNGYVDAGDSWRSMYETPSLEQDLERLFQELQPLYLNLHAYVRRALHRHYGAQHINLEGPIPAHLLGNMWAQTWSNIYDLVVPFPSAPSMDTTEAMLKQGWTPRRMFKEADDFFTSLGLLPVPPEFWNKSMLEKPTDGREVVCHASAWDFYNGKDFRIKQCTTVNLEDLVVAHHEMGHIQYFMQYKDLPVALREGANPGFHEAIGDVLALSVSTPKHLHSLNLLSSEGGSDEHDINFLMKMALDKIAFIPFSYLVDQWRWRVFDGSITKENYNQEWWSLRLKYQGLCPPVPRTQGDFDPGAKFHIPSSVPYIRYFVSFIIQFQFHEALCQAAGHTGPLHKCDIYQSKEAGQRLATAMKLGFSRPWPEAMQLITGQPNMSASAMLSYFKPLLDWLRTENELHGEKLGWPQYNWTPNSARSEGPLPDSGRVSFLGLDLDAQQARVGQWLLLFLGIALLVATLGLSQRLFSIRHRSLHRHSHGPQFGSEVELRHS</sequence>
<reference key="1">
    <citation type="journal article" date="1988" name="Proc. Natl. Acad. Sci. U.S.A.">
        <title>Two putative active centers in human angiotensin I-converting enzyme revealed by molecular cloning.</title>
        <authorList>
            <person name="Soubrier F."/>
            <person name="Alhenc-Gelas F."/>
            <person name="Hubert C."/>
            <person name="Allegrini J."/>
            <person name="John M."/>
            <person name="Tregear G."/>
            <person name="Corbol P."/>
        </authorList>
    </citation>
    <scope>NUCLEOTIDE SEQUENCE [MRNA] (ISOFORM SOMATIC-1)</scope>
</reference>
<reference key="2">
    <citation type="journal article" date="1989" name="FEBS Lett.">
        <title>The testicular transcript of the angiotensin I-converting enzyme encodes for the ancestral, non-duplicated form of the enzyme.</title>
        <authorList>
            <person name="Lattion A.L."/>
            <person name="Soubrier F."/>
            <person name="Allegrini J."/>
            <person name="Hubert C."/>
            <person name="Corvol P."/>
            <person name="Alhenc-Gelas F."/>
        </authorList>
    </citation>
    <scope>NUCLEOTIDE SEQUENCE [MRNA] (ISOFORM TESTIS-SPECIFIC)</scope>
    <scope>TISSUE SPECIFICITY (ISOFORM TESTIS-SPECIFIC)</scope>
</reference>
<reference key="3">
    <citation type="journal article" date="1989" name="Proc. Natl. Acad. Sci. U.S.A.">
        <title>Molecular cloning of human testicular angiotensin-converting enzyme: the testis isozyme is identical to the C-terminal half of endothelial angiotensin-converting enzyme.</title>
        <authorList>
            <person name="Ehlers M.R.W."/>
            <person name="Fox E.A."/>
            <person name="Strydom D.J."/>
            <person name="Riordan J.F."/>
        </authorList>
    </citation>
    <scope>NUCLEOTIDE SEQUENCE [MRNA] (ISOFORM TESTIS-SPECIFIC)</scope>
    <scope>TISSUE SPECIFICITY (ISOFORM TESTIS-SPECIFIC)</scope>
</reference>
<reference key="4">
    <citation type="journal article" date="1999" name="Nat. Genet.">
        <title>Sequence variation in the human angiotensin converting enzyme.</title>
        <authorList>
            <person name="Rieder M.J."/>
            <person name="Taylor S.L."/>
            <person name="Clark A.G."/>
            <person name="Nickerson D.A."/>
        </authorList>
    </citation>
    <scope>NUCLEOTIDE SEQUENCE [GENOMIC DNA]</scope>
    <scope>VARIANTS SER-261; TRP-561 AND SER-1286</scope>
</reference>
<reference key="5">
    <citation type="journal article" date="2004" name="Nat. Genet.">
        <title>Complete sequencing and characterization of 21,243 full-length human cDNAs.</title>
        <authorList>
            <person name="Ota T."/>
            <person name="Suzuki Y."/>
            <person name="Nishikawa T."/>
            <person name="Otsuki T."/>
            <person name="Sugiyama T."/>
            <person name="Irie R."/>
            <person name="Wakamatsu A."/>
            <person name="Hayashi K."/>
            <person name="Sato H."/>
            <person name="Nagai K."/>
            <person name="Kimura K."/>
            <person name="Makita H."/>
            <person name="Sekine M."/>
            <person name="Obayashi M."/>
            <person name="Nishi T."/>
            <person name="Shibahara T."/>
            <person name="Tanaka T."/>
            <person name="Ishii S."/>
            <person name="Yamamoto J."/>
            <person name="Saito K."/>
            <person name="Kawai Y."/>
            <person name="Isono Y."/>
            <person name="Nakamura Y."/>
            <person name="Nagahari K."/>
            <person name="Murakami K."/>
            <person name="Yasuda T."/>
            <person name="Iwayanagi T."/>
            <person name="Wagatsuma M."/>
            <person name="Shiratori A."/>
            <person name="Sudo H."/>
            <person name="Hosoiri T."/>
            <person name="Kaku Y."/>
            <person name="Kodaira H."/>
            <person name="Kondo H."/>
            <person name="Sugawara M."/>
            <person name="Takahashi M."/>
            <person name="Kanda K."/>
            <person name="Yokoi T."/>
            <person name="Furuya T."/>
            <person name="Kikkawa E."/>
            <person name="Omura Y."/>
            <person name="Abe K."/>
            <person name="Kamihara K."/>
            <person name="Katsuta N."/>
            <person name="Sato K."/>
            <person name="Tanikawa M."/>
            <person name="Yamazaki M."/>
            <person name="Ninomiya K."/>
            <person name="Ishibashi T."/>
            <person name="Yamashita H."/>
            <person name="Murakawa K."/>
            <person name="Fujimori K."/>
            <person name="Tanai H."/>
            <person name="Kimata M."/>
            <person name="Watanabe M."/>
            <person name="Hiraoka S."/>
            <person name="Chiba Y."/>
            <person name="Ishida S."/>
            <person name="Ono Y."/>
            <person name="Takiguchi S."/>
            <person name="Watanabe S."/>
            <person name="Yosida M."/>
            <person name="Hotuta T."/>
            <person name="Kusano J."/>
            <person name="Kanehori K."/>
            <person name="Takahashi-Fujii A."/>
            <person name="Hara H."/>
            <person name="Tanase T.-O."/>
            <person name="Nomura Y."/>
            <person name="Togiya S."/>
            <person name="Komai F."/>
            <person name="Hara R."/>
            <person name="Takeuchi K."/>
            <person name="Arita M."/>
            <person name="Imose N."/>
            <person name="Musashino K."/>
            <person name="Yuuki H."/>
            <person name="Oshima A."/>
            <person name="Sasaki N."/>
            <person name="Aotsuka S."/>
            <person name="Yoshikawa Y."/>
            <person name="Matsunawa H."/>
            <person name="Ichihara T."/>
            <person name="Shiohata N."/>
            <person name="Sano S."/>
            <person name="Moriya S."/>
            <person name="Momiyama H."/>
            <person name="Satoh N."/>
            <person name="Takami S."/>
            <person name="Terashima Y."/>
            <person name="Suzuki O."/>
            <person name="Nakagawa S."/>
            <person name="Senoh A."/>
            <person name="Mizoguchi H."/>
            <person name="Goto Y."/>
            <person name="Shimizu F."/>
            <person name="Wakebe H."/>
            <person name="Hishigaki H."/>
            <person name="Watanabe T."/>
            <person name="Sugiyama A."/>
            <person name="Takemoto M."/>
            <person name="Kawakami B."/>
            <person name="Yamazaki M."/>
            <person name="Watanabe K."/>
            <person name="Kumagai A."/>
            <person name="Itakura S."/>
            <person name="Fukuzumi Y."/>
            <person name="Fujimori Y."/>
            <person name="Komiyama M."/>
            <person name="Tashiro H."/>
            <person name="Tanigami A."/>
            <person name="Fujiwara T."/>
            <person name="Ono T."/>
            <person name="Yamada K."/>
            <person name="Fujii Y."/>
            <person name="Ozaki K."/>
            <person name="Hirao M."/>
            <person name="Ohmori Y."/>
            <person name="Kawabata A."/>
            <person name="Hikiji T."/>
            <person name="Kobatake N."/>
            <person name="Inagaki H."/>
            <person name="Ikema Y."/>
            <person name="Okamoto S."/>
            <person name="Okitani R."/>
            <person name="Kawakami T."/>
            <person name="Noguchi S."/>
            <person name="Itoh T."/>
            <person name="Shigeta K."/>
            <person name="Senba T."/>
            <person name="Matsumura K."/>
            <person name="Nakajima Y."/>
            <person name="Mizuno T."/>
            <person name="Morinaga M."/>
            <person name="Sasaki M."/>
            <person name="Togashi T."/>
            <person name="Oyama M."/>
            <person name="Hata H."/>
            <person name="Watanabe M."/>
            <person name="Komatsu T."/>
            <person name="Mizushima-Sugano J."/>
            <person name="Satoh T."/>
            <person name="Shirai Y."/>
            <person name="Takahashi Y."/>
            <person name="Nakagawa K."/>
            <person name="Okumura K."/>
            <person name="Nagase T."/>
            <person name="Nomura N."/>
            <person name="Kikuchi H."/>
            <person name="Masuho Y."/>
            <person name="Yamashita R."/>
            <person name="Nakai K."/>
            <person name="Yada T."/>
            <person name="Nakamura Y."/>
            <person name="Ohara O."/>
            <person name="Isogai T."/>
            <person name="Sugano S."/>
        </authorList>
    </citation>
    <scope>NUCLEOTIDE SEQUENCE [LARGE SCALE MRNA] (ISOFORM 4)</scope>
    <source>
        <tissue>Testis</tissue>
    </source>
</reference>
<reference key="6">
    <citation type="submission" date="2007-12" db="EMBL/GenBank/DDBJ databases">
        <authorList>
            <consortium name="NHLBI resequencing and genotyping service (RS&amp;G)"/>
        </authorList>
    </citation>
    <scope>NUCLEOTIDE SEQUENCE [GENOMIC DNA]</scope>
</reference>
<reference key="7">
    <citation type="submission" date="2005-03" db="EMBL/GenBank/DDBJ databases">
        <authorList>
            <person name="Totoki Y."/>
            <person name="Toyoda A."/>
            <person name="Takeda T."/>
            <person name="Sakaki Y."/>
            <person name="Tanaka A."/>
            <person name="Yokoyama S."/>
            <person name="Ohara O."/>
            <person name="Nagase T."/>
            <person name="Kikuno R.F."/>
        </authorList>
    </citation>
    <scope>NUCLEOTIDE SEQUENCE [LARGE SCALE MRNA] OF 1-1239 (ISOFORM SOMATIC-1)</scope>
    <source>
        <tissue>Brain</tissue>
    </source>
</reference>
<reference key="8">
    <citation type="journal article" date="2006" name="Nature">
        <title>DNA sequence of human chromosome 17 and analysis of rearrangement in the human lineage.</title>
        <authorList>
            <person name="Zody M.C."/>
            <person name="Garber M."/>
            <person name="Adams D.J."/>
            <person name="Sharpe T."/>
            <person name="Harrow J."/>
            <person name="Lupski J.R."/>
            <person name="Nicholson C."/>
            <person name="Searle S.M."/>
            <person name="Wilming L."/>
            <person name="Young S.K."/>
            <person name="Abouelleil A."/>
            <person name="Allen N.R."/>
            <person name="Bi W."/>
            <person name="Bloom T."/>
            <person name="Borowsky M.L."/>
            <person name="Bugalter B.E."/>
            <person name="Butler J."/>
            <person name="Chang J.L."/>
            <person name="Chen C.-K."/>
            <person name="Cook A."/>
            <person name="Corum B."/>
            <person name="Cuomo C.A."/>
            <person name="de Jong P.J."/>
            <person name="DeCaprio D."/>
            <person name="Dewar K."/>
            <person name="FitzGerald M."/>
            <person name="Gilbert J."/>
            <person name="Gibson R."/>
            <person name="Gnerre S."/>
            <person name="Goldstein S."/>
            <person name="Grafham D.V."/>
            <person name="Grocock R."/>
            <person name="Hafez N."/>
            <person name="Hagopian D.S."/>
            <person name="Hart E."/>
            <person name="Norman C.H."/>
            <person name="Humphray S."/>
            <person name="Jaffe D.B."/>
            <person name="Jones M."/>
            <person name="Kamal M."/>
            <person name="Khodiyar V.K."/>
            <person name="LaButti K."/>
            <person name="Laird G."/>
            <person name="Lehoczky J."/>
            <person name="Liu X."/>
            <person name="Lokyitsang T."/>
            <person name="Loveland J."/>
            <person name="Lui A."/>
            <person name="Macdonald P."/>
            <person name="Major J.E."/>
            <person name="Matthews L."/>
            <person name="Mauceli E."/>
            <person name="McCarroll S.A."/>
            <person name="Mihalev A.H."/>
            <person name="Mudge J."/>
            <person name="Nguyen C."/>
            <person name="Nicol R."/>
            <person name="O'Leary S.B."/>
            <person name="Osoegawa K."/>
            <person name="Schwartz D.C."/>
            <person name="Shaw-Smith C."/>
            <person name="Stankiewicz P."/>
            <person name="Steward C."/>
            <person name="Swarbreck D."/>
            <person name="Venkataraman V."/>
            <person name="Whittaker C.A."/>
            <person name="Yang X."/>
            <person name="Zimmer A.R."/>
            <person name="Bradley A."/>
            <person name="Hubbard T."/>
            <person name="Birren B.W."/>
            <person name="Rogers J."/>
            <person name="Lander E.S."/>
            <person name="Nusbaum C."/>
        </authorList>
    </citation>
    <scope>NUCLEOTIDE SEQUENCE [LARGE SCALE GENOMIC DNA]</scope>
</reference>
<reference key="9">
    <citation type="journal article" date="1989" name="J. Biochem.">
        <title>Purification of human lung angiotensin-converting enzyme by high-performance liquid chromatography: properties and N-terminal amino acid sequence.</title>
        <authorList>
            <person name="Takeuchi K."/>
            <person name="Shimizu T."/>
            <person name="Ohishi N."/>
            <person name="Seyama Y."/>
            <person name="Takaku F."/>
            <person name="Yotsumoto H."/>
        </authorList>
    </citation>
    <scope>PROTEIN SEQUENCE OF 30-46</scope>
    <scope>FUNCTION</scope>
    <scope>CATALYTIC ACTIVITY</scope>
    <source>
        <tissue>Lung</tissue>
    </source>
</reference>
<reference key="10">
    <citation type="journal article" date="1998" name="Biochem. Biophys. Res. Commun.">
        <title>Alternative splicing of the mRNA coding for the human endothelial angiotensin-converting enzyme: a new mechanism for solubilization.</title>
        <authorList>
            <person name="Sugimura K."/>
            <person name="Tian X.-L."/>
            <person name="Hoffmann S."/>
            <person name="Ganten D."/>
            <person name="Bader M."/>
        </authorList>
    </citation>
    <scope>NUCLEOTIDE SEQUENCE [MRNA] OF 1114-1306 (ISOFORM SOMATIC-2)</scope>
    <scope>ALTERNATIVE SPLICING</scope>
    <source>
        <tissue>Umbilical vein endothelial cell</tissue>
    </source>
</reference>
<reference key="11">
    <citation type="journal article" date="1967" name="Nature">
        <title>Second kininase in human blood plasma.</title>
        <authorList>
            <person name="Yang H.Y."/>
            <person name="Erdoes E.G."/>
        </authorList>
    </citation>
    <scope>FUNCTION</scope>
    <scope>CATALYTIC ACTIVITY</scope>
</reference>
<reference key="12">
    <citation type="journal article" date="1970" name="Biochim. Biophys. Acta">
        <title>A dipeptidyl carboxypeptidase that converts angiotensin I and inactivates bradykinin.</title>
        <authorList>
            <person name="Yang H.Y."/>
            <person name="Erdoes E.G."/>
            <person name="Levin Y."/>
        </authorList>
    </citation>
    <scope>FUNCTION</scope>
    <scope>CATALYTIC ACTIVITY</scope>
</reference>
<reference key="13">
    <citation type="journal article" date="1978" name="Biochem. Pharmacol.">
        <title>Hydrolysis of enkephalin by cultured human endothelial cells and by purified peptidyl dipeptidase.</title>
        <authorList>
            <person name="Erdoes E.G."/>
            <person name="Johnson A.R."/>
            <person name="Boyden N.T."/>
        </authorList>
    </citation>
    <scope>FUNCTION</scope>
    <scope>CATALYTIC ACTIVITY</scope>
</reference>
<reference key="14">
    <citation type="journal article" date="1981" name="Peptides">
        <title>Purification and characterization of human converting enzyme (kininase II).</title>
        <authorList>
            <person name="Stewart T.A."/>
            <person name="Weare J.A."/>
            <person name="Erdoes E.G."/>
        </authorList>
    </citation>
    <scope>FUNCTION</scope>
    <scope>CATALYTIC ACTIVITY</scope>
    <scope>ACTIVITY REGULATION</scope>
    <scope>BIOPHYSICOCHEMICAL PROPERTIES</scope>
</reference>
<reference key="15">
    <citation type="journal article" date="1984" name="Peptides">
        <title>Hydrolysis of substance p and neurotensin by converting enzyme and neutral endopeptidase.</title>
        <authorList>
            <person name="Skidgel R.A."/>
            <person name="Engelbrecht S."/>
            <person name="Johnson A.R."/>
            <person name="Erdoes E.G."/>
        </authorList>
    </citation>
    <scope>FUNCTION</scope>
    <scope>CATALYTIC ACTIVITY</scope>
    <scope>ACTIVITY REGULATION</scope>
</reference>
<reference key="16">
    <citation type="journal article" date="1985" name="J. Biol. Chem.">
        <title>Proteolytic conversion of [Met]enkephalin-Arg6-Gly7-Leu8 by brain synaptic membranes. Characterization of formed peptides and mechanism of proteolysis.</title>
        <authorList>
            <person name="Norman J.A."/>
            <person name="Chang J.Y."/>
        </authorList>
    </citation>
    <scope>FUNCTION</scope>
</reference>
<reference key="17">
    <citation type="journal article" date="1985" name="Proc. Natl. Acad. Sci. U.S.A.">
        <title>Novel activity of human angiotensin I converting enzyme: release of the NH2- and COOH-terminal tripeptides from the luteinizing hormone-releasing hormone.</title>
        <authorList>
            <person name="Skidgel R.A."/>
            <person name="Erdoes E.G."/>
        </authorList>
    </citation>
    <scope>FUNCTION</scope>
</reference>
<reference key="18">
    <citation type="journal article" date="1991" name="Biochemistry">
        <title>Angiotensin-converting enzyme: zinc- and inhibitor-binding stoichiometries of the somatic and testis isozymes.</title>
        <authorList>
            <person name="Ehlers M.R.W."/>
            <person name="Riordan J.F."/>
        </authorList>
    </citation>
    <scope>COFACTOR</scope>
    <scope>ZINC-BINDING</scope>
</reference>
<reference key="19">
    <citation type="journal article" date="1991" name="J. Biol. Chem.">
        <title>Structure of the angiotensin I-converting enzyme gene. Two alternate promoters correspond to evolutionary steps of a duplicated gene.</title>
        <authorList>
            <person name="Hubert C."/>
            <person name="Houot A.M."/>
            <person name="Corvol P."/>
            <person name="Soubrier F."/>
        </authorList>
    </citation>
    <scope>ALTERNATIVE PROMOTER USAGE</scope>
    <scope>FUNCTION (ISOFORM TESTIS-SPECIFIC)</scope>
</reference>
<reference key="20">
    <citation type="journal article" date="1991" name="Protein Expr. Purif.">
        <title>Purification and characterization of recombinant human testis angiotensin-converting enzyme expressed in Chinese hamster ovary cells.</title>
        <authorList>
            <person name="Ehlers M.R."/>
            <person name="Chen Y.N."/>
            <person name="Riordan J.F."/>
        </authorList>
    </citation>
    <scope>FUNCTION (ISOFORM TESTIS-SPECIFIC)</scope>
    <scope>CATALYTIC ACTIVITY (ISOFORM TESTIS-SPECIFIC)</scope>
    <scope>ACTIVITY REGULATION (ISOFORM TESTIS-SPECIFIC)</scope>
    <scope>SUBCELLULAR LOCATION (ISOFORM TESTIS-SPECIFIC)</scope>
</reference>
<reference key="21">
    <citation type="journal article" date="1991" name="J. Biol. Chem.">
        <title>The two homologous domains of human angiotensin I-converting enzyme are both catalytically active.</title>
        <authorList>
            <person name="Wei L."/>
            <person name="Alhenc-Gelas F."/>
            <person name="Corvol P."/>
            <person name="Clauser E."/>
        </authorList>
    </citation>
    <scope>FUNCTION</scope>
    <scope>CATALYTIC ACTIVITY</scope>
    <scope>BIOPHYSICOCHEMICAL PROPERTIES</scope>
    <scope>MUTAGENESIS OF 390-HIS--HIS-394 AND 988-HIS--HIS-992</scope>
</reference>
<reference key="22">
    <citation type="journal article" date="1992" name="J. Biol. Chem.">
        <title>The two homologous domains of human angiotensin I-converting enzyme interact differently with competitive inhibitors.</title>
        <authorList>
            <person name="Wei L."/>
            <person name="Clauser E."/>
            <person name="Alhenc-Gelas F."/>
            <person name="Corvol P."/>
        </authorList>
    </citation>
    <scope>FUNCTION</scope>
    <scope>CATALYTIC ACTIVITY</scope>
    <scope>ACTIVITY REGULATION</scope>
    <scope>MUTAGENESIS OF 390-HIS--HIS-394 AND 988-HIS--HIS-992</scope>
</reference>
<reference key="23">
    <citation type="journal article" date="1993" name="Biochem. J.">
        <title>Involvement of human plasma angiotensin I-converting enzyme in the degradation of the haemoregulatory peptide N-acetyl-seryl-aspartyl-lysyl-proline.</title>
        <authorList>
            <person name="Rieger K.J."/>
            <person name="Saez-Servent N."/>
            <person name="Papet M.P."/>
            <person name="Wdzieczak-Bakala J."/>
            <person name="Morgat J.L."/>
            <person name="Thierry J."/>
            <person name="Voelter W."/>
            <person name="Lenfant M."/>
        </authorList>
    </citation>
    <scope>FUNCTION</scope>
    <scope>CATALYTIC ACTIVITY</scope>
</reference>
<reference key="24">
    <citation type="journal article" date="1993" name="J. Biol. Chem.">
        <title>Differences in the properties and enzymatic specificities of the two active sites of angiotensin I-converting enzyme (kininase II). Studies with bradykinin and other natural peptides.</title>
        <authorList>
            <person name="Jaspard E."/>
            <person name="Wei L."/>
            <person name="Alhenc-Gelas F."/>
        </authorList>
    </citation>
    <scope>FUNCTION</scope>
    <scope>CATALYTIC ACTIVITY</scope>
    <scope>BIOPHYSICOCHEMICAL PROPERTIES</scope>
    <scope>COFACTOR</scope>
    <scope>MUTAGENESIS OF 390-HIS--HIS-394 AND 988-HIS--HIS-992</scope>
</reference>
<reference key="25">
    <citation type="journal article" date="1993" name="J. Biol. Chem.">
        <title>Proteolytic release of human angiotensin-converting enzyme. Localization of the cleavage site.</title>
        <authorList>
            <person name="Beldent V."/>
            <person name="Michaud A."/>
            <person name="Wei L."/>
            <person name="Chauvet M.T."/>
            <person name="Corvol P."/>
        </authorList>
    </citation>
    <scope>FUNCTION</scope>
    <scope>SUBCELLULAR LOCATION (ANGIOTENSIN-CONVERTING ENZYME</scope>
    <scope>SOLUBLE FORM)</scope>
    <scope>MUTAGENESIS OF ARG-1166</scope>
</reference>
<reference key="26">
    <citation type="journal article" date="1994" name="J. Biol. Chem.">
        <title>Structure-function analysis of angiotensin I-converting enzyme using monoclonal antibodies. Selective inhibition of the amino-terminal active site.</title>
        <authorList>
            <person name="Danilov S."/>
            <person name="Jaspard E."/>
            <person name="Churakova T."/>
            <person name="Towbin H."/>
            <person name="Savoie F."/>
            <person name="Wei L."/>
            <person name="Alhenc-Gelas F."/>
        </authorList>
    </citation>
    <scope>FUNCTION</scope>
</reference>
<reference key="27">
    <citation type="journal article" date="1994" name="J. Biol. Chem.">
        <title>Identification of two active site residues in human angiotensin I-converting enzyme.</title>
        <authorList>
            <person name="Williams T.A."/>
            <person name="Corvol P."/>
            <person name="Soubrier F."/>
        </authorList>
    </citation>
    <scope>FUNCTION</scope>
    <scope>CATALYTIC ACTIVITY</scope>
    <scope>COFACTOR</scope>
    <scope>MUTAGENESIS OF 390-HIS--HIS-394; GLU-1016 AND ASP-1020</scope>
</reference>
<reference key="28">
    <citation type="journal article" date="1995" name="J. Biol. Chem.">
        <title>The hemoregulatory peptide N-acetyl-Ser-Asp-Lys-Pro is a natural and specific substrate of the N-terminal active site of human angiotensin-converting enzyme.</title>
        <authorList>
            <person name="Rousseau A."/>
            <person name="Michaud A."/>
            <person name="Chauvet M.T."/>
            <person name="Lenfant M."/>
            <person name="Corvol P."/>
        </authorList>
    </citation>
    <scope>FUNCTION</scope>
    <scope>CATALYTIC ACTIVITY</scope>
    <scope>BIOPHYSICOCHEMICAL PROPERTIES</scope>
    <scope>ACTIVITY REGULATION</scope>
    <scope>MUTAGENESIS OF 390-HIS--HIS-394</scope>
</reference>
<reference key="29">
    <citation type="journal article" date="1995" name="J. Biol. Chem.">
        <title>Cell surface localization of proteolysis of human endothelial angiotensin I-converting enzyme. Effect of the amino-terminal domain in the solubilization process.</title>
        <authorList>
            <person name="Beldent V."/>
            <person name="Michaud A."/>
            <person name="Bonnefoy C."/>
            <person name="Chauvet M.T."/>
            <person name="Corvol P."/>
        </authorList>
    </citation>
    <scope>FUNCTION</scope>
    <scope>SUBCELLULAR LOCATION (ANGIOTENSIN-CONVERTING ENZYME</scope>
    <scope>SOLUBLE FORM)</scope>
    <scope>PROTEOLYTIC CLEAVAGE</scope>
    <scope>CLEAVAGE SITE</scope>
</reference>
<reference key="30">
    <citation type="journal article" date="1996" name="Biochemistry">
        <title>Assignment of free and disulfide-bonded cysteine residues in testis angiotensin-converting enzyme: functional implications.</title>
        <authorList>
            <person name="Sturrock E.D."/>
            <person name="Yu X.C."/>
            <person name="Wu Z."/>
            <person name="Biemann K."/>
            <person name="Riordan J.F."/>
        </authorList>
    </citation>
    <scope>DISULFIDE BONDS</scope>
</reference>
<reference key="31">
    <citation type="journal article" date="1996" name="J. Biol. Chem.">
        <title>Different glycosylation requirements for the synthesis of enzymatically active angiotensin-converting enzyme in mammalian cells and yeast.</title>
        <authorList>
            <person name="Sadhukhan R."/>
            <person name="Sen I."/>
        </authorList>
    </citation>
    <scope>SUBCELLULAR LOCATION (ISOFORM TESTIS-SPECIFIC)</scope>
    <scope>GLYCOSYLATION AT ASN-103; ASN-121; ASN-140; ASN-368 AND ASN-617 (ISOFORM TESTIS-SPECIFIC)</scope>
    <scope>MUTAGENESIS OF ASN-103; ASN-121; ASN-140; ASN-186 AND ASN-617 (ISOFORM TESTIS-SPECIFIC)</scope>
</reference>
<reference key="32">
    <citation type="journal article" date="1996" name="J. Clin. Invest.">
        <title>Acute angiotensin-converting enzyme inhibition increases the plasma level of the natural stem cell regulator N-acetyl-seryl-aspartyl-lysyl-proline.</title>
        <authorList>
            <person name="Azizi M."/>
            <person name="Rousseau A."/>
            <person name="Ezan E."/>
            <person name="Guyene T.T."/>
            <person name="Michelet S."/>
            <person name="Grognet J.M."/>
            <person name="Lenfant M."/>
            <person name="Corvol P."/>
            <person name="Menard J."/>
        </authorList>
    </citation>
    <scope>FUNCTION</scope>
    <scope>ACTIVITY REGULATION</scope>
</reference>
<reference key="33">
    <citation type="journal article" date="1997" name="Biochem. J.">
        <title>Cleavage of arginyl-arginine and lysyl-arginine from the C-terminus of pro-hormone peptides by human germinal angiotensin I-converting enzyme (ACE) and the C-domain of human somatic ACE.</title>
        <authorList>
            <person name="Isaac R.E."/>
            <person name="Williams T.A."/>
            <person name="Sajid M."/>
            <person name="Corvol P."/>
            <person name="Coates D."/>
        </authorList>
    </citation>
    <scope>FUNCTION</scope>
    <scope>BIOPHYSICOCHEMICAL PROPERTIES</scope>
</reference>
<reference key="34">
    <citation type="journal article" date="1997" name="J. Biol. Chem.">
        <title>Identification of N-linked glycosylation sites in human testis angiotensin-converting enzyme and expression of an active deglycosylated form.</title>
        <authorList>
            <person name="Yu X.C."/>
            <person name="Sturrock E.D."/>
            <person name="Wu Z."/>
            <person name="Biemann K."/>
            <person name="Ehlers M.R.W."/>
            <person name="Riordan J.F."/>
        </authorList>
    </citation>
    <scope>GLYCOSYLATION AT ASN-38; ASN-54; ASN-111; ASN-146; ASN-509; ASN-695; ASN-714; ASN-760; ASN-942 AND ASN-1191</scope>
    <scope>LACK OF GLYCOSYLATION AT ASN-1225</scope>
    <scope>IDENTIFICATION BY MASS SPECTROMETRY</scope>
</reference>
<reference key="35">
    <citation type="journal article" date="1999" name="Eur. J. Biochem.">
        <title>Hydrolysis by somatic angiotensin-I converting enzyme of basic dipeptides from a cholecystokinin/gastrin and a LH-RH peptide extended at the C-terminus with gly-Arg/Lys-arg, but not from diarginyl insulin.</title>
        <authorList>
            <person name="Isaac R.E."/>
            <person name="Michaud A."/>
            <person name="Keen J.N."/>
            <person name="Williams T.A."/>
            <person name="Coates D."/>
            <person name="Wetsel W.C."/>
            <person name="Corvol P."/>
        </authorList>
    </citation>
    <scope>FUNCTION</scope>
    <scope>MUTAGENESIS OF 390-HIS--HIS-394 AND 988-HIS--HIS-992</scope>
</reference>
<reference key="36">
    <citation type="journal article" date="2000" name="Biochemistry">
        <title>Peptidase specificity characterization of C- and N-terminal catalytic sites of angiotensin I-converting enzyme.</title>
        <authorList>
            <person name="Araujo M.C."/>
            <person name="Melo R.L."/>
            <person name="Cesari M.H."/>
            <person name="Juliano M.A."/>
            <person name="Juliano L."/>
            <person name="Carmona A.K."/>
        </authorList>
    </citation>
    <scope>FUNCTION</scope>
    <scope>CATALYTIC ACTIVITY</scope>
</reference>
<reference key="37">
    <citation type="journal article" date="2000" name="Biochem. J.">
        <title>Shedding of somatic angiotensin-converting enzyme (ACE) is inefficient compared with testis ACE despite cleavage at identical stalk sites.</title>
        <authorList>
            <person name="Woodman Z.L."/>
            <person name="Oppong S.Y."/>
            <person name="Cook S."/>
            <person name="Hooper N.M."/>
            <person name="Schwager S.L.U."/>
            <person name="Brandt W.F."/>
            <person name="Ehlers M.R.W."/>
            <person name="Sturrock E.D."/>
        </authorList>
    </citation>
    <scope>FUNCTION</scope>
    <scope>SUBCELLULAR LOCATION (ANGIOTENSIN-CONVERTING ENZYME</scope>
    <scope>SOLUBLE FORM)</scope>
    <scope>PROTEOLYTIC CLEAVAGE</scope>
    <scope>CLEAVAGE SITE</scope>
    <scope>IDENTIFICATION BY MASS SPECTROMETRY</scope>
</reference>
<reference key="38">
    <citation type="journal article" date="2000" name="Circ. Res.">
        <title>A novel angiotensin-converting enzyme-related carboxypeptidase (ACE2) converts angiotensin I to angiotensin 1-9.</title>
        <authorList>
            <person name="Donoghue M."/>
            <person name="Hsieh F."/>
            <person name="Baronas E."/>
            <person name="Godbout K."/>
            <person name="Gosselin M."/>
            <person name="Stagliano N."/>
            <person name="Donovan M."/>
            <person name="Woolf B."/>
            <person name="Robison K."/>
            <person name="Jeyaseelan R."/>
            <person name="Breitbart R.E."/>
            <person name="Acton S."/>
        </authorList>
    </citation>
    <scope>TISSUE SPECIFICITY</scope>
</reference>
<reference key="39">
    <citation type="journal article" date="2000" name="J. Biol. Chem.">
        <title>A human homolog of angiotensin-converting enzyme. Cloning and functional expression as a captopril-insensitive carboxypeptidase.</title>
        <authorList>
            <person name="Tipnis S.R."/>
            <person name="Hooper N.M."/>
            <person name="Hyde R."/>
            <person name="Karran E."/>
            <person name="Christie G."/>
            <person name="Turner A.J."/>
        </authorList>
    </citation>
    <scope>TISSUE SPECIFICITY</scope>
</reference>
<reference key="40">
    <citation type="journal article" date="2001" name="J. Biol. Chem.">
        <title>Increased shedding of angiotensin-converting enzyme by a mutation identified in the stalk region.</title>
        <authorList>
            <person name="Eyries M."/>
            <person name="Michaud A."/>
            <person name="Deinum J."/>
            <person name="Agrapart M."/>
            <person name="Chomilier J."/>
            <person name="Kramers C."/>
            <person name="Soubrier F."/>
        </authorList>
    </citation>
    <scope>CATALYTIC ACTIVITY</scope>
    <scope>BIOPHYSICOCHEMICAL PROPERTIES</scope>
    <scope>CHARACTERIZATION OF VARIANT LEU-1228</scope>
</reference>
<reference key="41">
    <citation type="journal article" date="2001" name="J. Biol. Chem.">
        <title>Arg(1098) is critical for the chloride dependence of human angiotensin I-converting enzyme C-domain catalytic activity.</title>
        <authorList>
            <person name="Liu X."/>
            <person name="Fernandez M."/>
            <person name="Wouters M.A."/>
            <person name="Heyberger S."/>
            <person name="Husain A."/>
        </authorList>
    </citation>
    <scope>FUNCTION</scope>
    <scope>CATALYTIC ACTIVITY</scope>
    <scope>ACTIVITY REGULATION</scope>
    <scope>COFACTOR</scope>
    <scope>MUTAGENESIS OF ARG-529 AND ARG-1127</scope>
</reference>
<reference key="42">
    <citation type="journal article" date="2001" name="J. Biol. Chem.">
        <title>A point mutation in the juxtamembrane stalk of human angiotensin I-converting enzyme invokes the action of a distinct secretase.</title>
        <authorList>
            <person name="Alfalah M."/>
            <person name="Parkin E.T."/>
            <person name="Jacob R."/>
            <person name="Sturrock E.D."/>
            <person name="Mentele R."/>
            <person name="Turner A.J."/>
            <person name="Hooper N.M."/>
            <person name="Naim H.Y."/>
        </authorList>
    </citation>
    <scope>FUNCTION</scope>
    <scope>SUBCELLULAR LOCATION (ANGIOTENSIN-CONVERTING ENZYME</scope>
    <scope>SOLUBLE FORM)</scope>
    <scope>PROTEOLYTIC CLEAVAGE</scope>
    <scope>CLEAVAGE SITE</scope>
    <scope>MUTAGENESIS OF ASN-1229</scope>
</reference>
<reference key="43">
    <citation type="journal article" date="2001" name="J. Biol. Chem.">
        <title>Angiotensin-converting enzyme degrades Alzheimer amyloid beta-peptide (A beta); retards A beta aggregation, deposition, fibril formation; and inhibits cytotoxicity.</title>
        <authorList>
            <person name="Hu J."/>
            <person name="Igarashi A."/>
            <person name="Kamata M."/>
            <person name="Nakagawa H."/>
        </authorList>
    </citation>
    <scope>FUNCTION</scope>
</reference>
<reference key="44">
    <citation type="journal article" date="2002" name="Circ. Res.">
        <title>CK2 phosphorylates the angiotensin-converting enzyme and regulates its retention in the endothelial cell plasma membrane.</title>
        <authorList>
            <person name="Kohlstedt K."/>
            <person name="Shoghi F."/>
            <person name="Mueller-Esterl W."/>
            <person name="Busse R."/>
            <person name="Fleming I."/>
        </authorList>
    </citation>
    <scope>PHOSPHORYLATION AT SER-1299</scope>
    <scope>SUBCELLULAR LOCATION</scope>
    <scope>MUTAGENESIS OF SER-1299</scope>
</reference>
<reference key="45">
    <citation type="journal article" date="2002" name="FEBS Lett.">
        <title>Quantitative mRNA expression profiling of ACE 2, a novel homologue of angiotensin converting enzyme.</title>
        <authorList>
            <person name="Harmer D."/>
            <person name="Gilbert M."/>
            <person name="Borman R."/>
            <person name="Clark K.L."/>
        </authorList>
    </citation>
    <scope>TISSUE SPECIFICITY</scope>
</reference>
<reference key="46">
    <citation type="journal article" date="2003" name="Biochem. J.">
        <title>Deglycosylation, processing and crystallization of human testis angiotensin-converting enzyme.</title>
        <authorList>
            <person name="Gordon K."/>
            <person name="Redelinghuys P."/>
            <person name="Schwager S.L.U."/>
            <person name="Ehlers M.R.W."/>
            <person name="Papageorgiou A.C."/>
            <person name="Natesh R."/>
            <person name="Acharya K.R."/>
            <person name="Sturrock E.D."/>
        </authorList>
    </citation>
    <scope>CATALYTIC ACTIVITY</scope>
    <scope>BIOPHYSICOCHEMICAL PROPERTIES</scope>
    <scope>CLEAVAGE SITE</scope>
</reference>
<reference key="47">
    <citation type="journal article" date="2004" name="BMC Med.">
        <title>ACE2 gene expression is up-regulated in the human failing heart.</title>
        <authorList>
            <person name="Goulter A.B."/>
            <person name="Goddard M.J."/>
            <person name="Allen J.C."/>
            <person name="Clark K.L."/>
        </authorList>
    </citation>
    <scope>INDUCTION</scope>
</reference>
<reference key="48">
    <citation type="journal article" date="2005" name="Eur. Heart J.">
        <title>Myocardial infarction increases ACE2 expression in rat and humans.</title>
        <authorList>
            <person name="Burrell L.M."/>
            <person name="Risvanis J."/>
            <person name="Kubota E."/>
            <person name="Dean R.G."/>
            <person name="MacDonald P.S."/>
            <person name="Lu S."/>
            <person name="Tikellis C."/>
            <person name="Grant S.L."/>
            <person name="Lew R.A."/>
            <person name="Smith A.I."/>
            <person name="Cooper M.E."/>
            <person name="Johnston C.I."/>
        </authorList>
    </citation>
    <scope>TISSUE SPECIFICITY</scope>
    <scope>INDUCTION</scope>
</reference>
<reference key="49">
    <citation type="journal article" date="2005" name="J. Biol. Chem.">
        <title>Molecular basis of exopeptidase activity in the C-terminal domain of human angiotensin I-converting enzyme: insights into the origins of its exopeptidase activity.</title>
        <authorList>
            <person name="Naqvi N."/>
            <person name="Liu K."/>
            <person name="Graham R.M."/>
            <person name="Husain A."/>
        </authorList>
    </citation>
    <scope>FUNCTION</scope>
    <scope>ACTIVITY REGULATION</scope>
    <scope>MUTAGENESIS OF LYS-1116 AND TYR-1125</scope>
</reference>
<reference key="50">
    <citation type="journal article" date="2005" name="J. Biol. Chem.">
        <title>Amyloid beta-protein is degraded by cellular angiotensin-converting enzyme (ACE) and elevated by an ACE inhibitor.</title>
        <authorList>
            <person name="Hemming M.L."/>
            <person name="Selkoe D.J."/>
        </authorList>
    </citation>
    <scope>FUNCTION</scope>
    <scope>ACTIVE SITES</scope>
    <scope>MUTAGENESIS OF GLU-391 AND GLU-989</scope>
</reference>
<reference key="51">
    <citation type="journal article" date="2005" name="J. Proteome Res.">
        <title>Human plasma N-glycoproteome analysis by immunoaffinity subtraction, hydrazide chemistry, and mass spectrometry.</title>
        <authorList>
            <person name="Liu T."/>
            <person name="Qian W.-J."/>
            <person name="Gritsenko M.A."/>
            <person name="Camp D.G. II"/>
            <person name="Monroe M.E."/>
            <person name="Moore R.J."/>
            <person name="Smith R.D."/>
        </authorList>
    </citation>
    <scope>GLYCOSYLATION [LARGE SCALE ANALYSIS] AT ASN-509; ASN-695 AND ASN-714</scope>
    <source>
        <tissue>Plasma</tissue>
    </source>
</reference>
<reference key="52">
    <citation type="journal article" date="2006" name="Mol. Pharmacol.">
        <title>Angiotensin-converting enzyme (ACE) dimerization is the initial step in the ACE inhibitor-induced ACE signaling cascade in endothelial cells.</title>
        <authorList>
            <person name="Kohlstedt K."/>
            <person name="Gershome C."/>
            <person name="Friedrich M."/>
            <person name="Mueller-Esterl W."/>
            <person name="Alhenc-Gelas F."/>
            <person name="Busse R."/>
            <person name="Fleming I."/>
        </authorList>
    </citation>
    <scope>SUBUNIT</scope>
</reference>
<reference key="53">
    <citation type="journal article" date="2007" name="Proc. Natl. Acad. Sci. U.S.A.">
        <title>Hemopressin is an inverse agonist of CB1 cannabinoid receptors.</title>
        <authorList>
            <person name="Heimann A.S."/>
            <person name="Gomes I."/>
            <person name="Dale C.S."/>
            <person name="Pagano R.L."/>
            <person name="Gupta A."/>
            <person name="de Souza L.L."/>
            <person name="Luchessi A.D."/>
            <person name="Castro L.M."/>
            <person name="Giorgi R."/>
            <person name="Rioli V."/>
            <person name="Ferro E.S."/>
            <person name="Devi L.A."/>
        </authorList>
    </citation>
    <scope>FUNCTION</scope>
</reference>
<reference key="54">
    <citation type="journal article" date="2009" name="J. Biol. Chem.">
        <title>Abeta42-to-Abeta40- and angiotensin-converting activities in different domains of angiotensin-converting enzyme.</title>
        <authorList>
            <person name="Zou K."/>
            <person name="Maeda T."/>
            <person name="Watanabe A."/>
            <person name="Liu J."/>
            <person name="Liu S."/>
            <person name="Oba R."/>
            <person name="Satoh Y."/>
            <person name="Komano H."/>
            <person name="Michikawa M."/>
        </authorList>
    </citation>
    <scope>FUNCTION</scope>
    <scope>CATALYTIC ACTIVITY</scope>
    <scope>ACTIVE SITES</scope>
    <scope>MUTAGENESIS OF GLU-391 AND GLU-989</scope>
</reference>
<reference key="55">
    <citation type="journal article" date="2009" name="J. Proteome Res.">
        <title>Glycoproteomics analysis of human liver tissue by combination of multiple enzyme digestion and hydrazide chemistry.</title>
        <authorList>
            <person name="Chen R."/>
            <person name="Jiang X."/>
            <person name="Sun D."/>
            <person name="Han G."/>
            <person name="Wang F."/>
            <person name="Ye M."/>
            <person name="Wang L."/>
            <person name="Zou H."/>
        </authorList>
    </citation>
    <scope>GLYCOSYLATION [LARGE SCALE ANALYSIS] AT ASN-111; ASN-445 AND ASN-714</scope>
    <source>
        <tissue>Liver</tissue>
    </source>
</reference>
<reference key="56">
    <citation type="journal article" date="2011" name="BMC Syst. Biol.">
        <title>Initial characterization of the human central proteome.</title>
        <authorList>
            <person name="Burkard T.R."/>
            <person name="Planyavsky M."/>
            <person name="Kaupe I."/>
            <person name="Breitwieser F.P."/>
            <person name="Buerckstuemmer T."/>
            <person name="Bennett K.L."/>
            <person name="Superti-Furga G."/>
            <person name="Colinge J."/>
        </authorList>
    </citation>
    <scope>IDENTIFICATION BY MASS SPECTROMETRY [LARGE SCALE ANALYSIS]</scope>
</reference>
<reference key="57">
    <citation type="journal article" date="2011" name="PLoS ONE">
        <title>ACE as a mechanosensor to shear stress influences the control of its own regulation via phosphorylation of cytoplasmic Ser(1270).</title>
        <authorList>
            <person name="Barauna V.G."/>
            <person name="Campos L.C."/>
            <person name="Miyakawa A.A."/>
            <person name="Krieger J.E."/>
        </authorList>
    </citation>
    <scope>PHOSPHORYLATION AT SER-1299</scope>
    <scope>MUTAGENESIS OF SER-1299</scope>
</reference>
<reference evidence="89 90" key="58">
    <citation type="journal article" date="2003" name="Nature">
        <title>Crystal structure of the human angiotensin-converting enzyme-lisinopril complex.</title>
        <authorList>
            <person name="Natesh R."/>
            <person name="Schwager S.L.U."/>
            <person name="Sturrock E.D."/>
            <person name="Acharya K.R."/>
        </authorList>
    </citation>
    <scope>X-RAY CRYSTALLOGRAPHY (2.0 ANGSTROMS) OF 642-1230</scope>
    <scope>X-RAY CRYSTALLOGRAPHY (2.0 ANGSTROMS) OF 642-1230 IN COMPLEX WITH CHLORIDE AND LISINOPRIL</scope>
    <scope>ACTIVE SITE</scope>
    <scope>ACTIVITY REGULATION</scope>
</reference>
<reference key="59">
    <citation type="journal article" date="2004" name="Biochemistry">
        <title>Structural details on the binding of antihypertensive drugs captopril and enalaprilat to human testicular angiotensin I-converting enzyme.</title>
        <authorList>
            <person name="Natesh R."/>
            <person name="Schwager S.L.U."/>
            <person name="Evans H.R."/>
            <person name="Sturrock E.D."/>
            <person name="Acharya K.R."/>
        </authorList>
    </citation>
    <scope>X-RAY CRYSTALLOGRAPHY (1.8 ANGSTROMS) OF 642-1230 IN COMPLEX WITH ENALAPRILAT</scope>
    <scope>X-RAY CRYSTALLOGRAPHY (2.0 ANGSTROMS) OF 642-1230 IN COMPLEX WITH CAPTOPRIL</scope>
</reference>
<reference key="60">
    <citation type="journal article" date="2006" name="J. Mol. Biol.">
        <title>Crystal structure of the N domain of human somatic angiotensin I-converting enzyme provides a structural basis for domain-specific inhibitor design.</title>
        <authorList>
            <person name="Corradi H.R."/>
            <person name="Schwager S.L.U."/>
            <person name="Nchinda A.T."/>
            <person name="Sturrock E.D."/>
            <person name="Acharya K.R."/>
        </authorList>
    </citation>
    <scope>X-RAY CRYSTALLOGRAPHY (3.0 ANGSTROMS) OF 30-641 IN COMPLEX WITH LISINOPRIL; ZINC AND CHLORIDE IONS</scope>
    <scope>ACTIVITY REGULATION</scope>
    <scope>GLYCOSYLATION AT ASN-54; ASN-74; ASN-146; ASN-318 AND ASN-509</scope>
</reference>
<reference evidence="91 93" key="61">
    <citation type="journal article" date="2010" name="J. Biol. Chem.">
        <title>The N domain of human angiotensin-I-converting enzyme: the role of N-glycosylation and the crystal structure in complex with an N domain-specific phosphinic inhibitor, RXP407.</title>
        <authorList>
            <person name="Anthony C.S."/>
            <person name="Corradi H.R."/>
            <person name="Schwager S.L."/>
            <person name="Redelinghuys P."/>
            <person name="Georgiadis D."/>
            <person name="Dive V."/>
            <person name="Acharya K.R."/>
            <person name="Sturrock E.D."/>
        </authorList>
    </citation>
    <scope>X-RAY CRYSTALLOGRAPHY (1.99 ANGSTROMS) OF 30-658 IN COMPLEX WITH ZINC</scope>
    <scope>FUNCTION</scope>
    <scope>CATALYTIC ACTIVITY</scope>
    <scope>COFACTOR</scope>
    <scope>GLYCOSYLATION AT ASN-38; ASN-54; ASN-74; ASN-111 ASN-146; ASN-160; ASN-445 AND ASN-509</scope>
    <scope>LACK OF GLYCOSYLATION AT ASN-523</scope>
    <scope>MUTAGENESIS OF ASN-318; ASN-445 AND ASN-509</scope>
</reference>
<reference evidence="92" key="62">
    <citation type="journal article" date="2011" name="FEBS J.">
        <title>Structural characterization of angiotensin I-converting enzyme in complex with a selenium analogue of captopril.</title>
        <authorList>
            <person name="Akif M."/>
            <person name="Masuyer G."/>
            <person name="Schwager S.L."/>
            <person name="Bhuyan B.J."/>
            <person name="Mugesh G."/>
            <person name="Isaac R.E."/>
            <person name="Sturrock E.D."/>
            <person name="Acharya K.R."/>
        </authorList>
    </citation>
    <scope>X-RAY CRYSTALLOGRAPHY (2.44 ANGSTROMS) OF 642-1230 IN COMPLEX WITH ZINC (ISOFORM TESTIS-SPECIFIC)</scope>
    <scope>ACTIVITY REGULATION (ISOFORM TESTIS-SPECIFIC)</scope>
    <scope>COFACTOR</scope>
    <scope>GLYCOSYLATION AT ASN-103 AND ASN-140 (ISOFORM TESTIS-SPECIFIC)</scope>
</reference>
<reference evidence="94 95" key="63">
    <citation type="journal article" date="2012" name="Sci. Rep.">
        <title>Molecular recognition and regulation of human angiotensin-I converting enzyme (ACE) activity by natural inhibitory peptides.</title>
        <authorList>
            <person name="Masuyer G."/>
            <person name="Schwager S.L."/>
            <person name="Sturrock E.D."/>
            <person name="Isaac R.E."/>
            <person name="Acharya K.R."/>
        </authorList>
    </citation>
    <scope>X-RAY CRYSTALLOGRAPHY (1.99 ANGSTROMS) OF 642-1230 IN COMPLEX WITH ZINC</scope>
    <scope>FUNCTION</scope>
    <scope>CATALYTIC ACTIVITY</scope>
    <scope>COFACTOR</scope>
    <scope>GLYCOSYLATION AT ASN-677 AND ASN-714</scope>
</reference>
<reference evidence="96 97 98 99 100" key="64">
    <citation type="journal article" date="2014" name="J. Biol. Chem.">
        <title>Molecular and thermodynamic mechanisms of the chloride-dependent human angiotensin-I-converting enzyme (ACE).</title>
        <authorList>
            <person name="Yates C.J."/>
            <person name="Masuyer G."/>
            <person name="Schwager S.L."/>
            <person name="Akif M."/>
            <person name="Sturrock E.D."/>
            <person name="Acharya K.R."/>
        </authorList>
    </citation>
    <scope>X-RAY CRYSTALLOGRAPHY (1.80 ANGSTROMS) OF 69-732 IN COMPLEX WITH ZINC (ISOFORM TESTIS-SPECIFIC)</scope>
    <scope>FUNCTION</scope>
    <scope>COFACTOR</scope>
    <scope>GLYCOSYLATION AT ASN-103 AND ASN-140 (ISOFORM TESTIS-SPECIFIC)</scope>
    <scope>MUTAGENESIS OF ARG-553 (ISOFORM TESTIS-SPECIFIC)</scope>
</reference>
<reference evidence="101 102" key="65">
    <citation type="journal article" date="2015" name="Sci. Rep.">
        <title>Structural basis of Ac-SDKP hydrolysis by Angiotensin-I converting enzyme.</title>
        <authorList>
            <person name="Masuyer G."/>
            <person name="Douglas R.G."/>
            <person name="Sturrock E.D."/>
            <person name="Acharya K.R."/>
        </authorList>
    </citation>
    <scope>X-RAY CRYSTALLOGRAPHY (1.80 ANGSTROMS) OF 30-657 IN COMPLEX WITH ZINC</scope>
    <scope>FUNCTION</scope>
    <scope>CATALYTIC ACTIVITY</scope>
    <scope>COFACTOR</scope>
    <scope>GLYCOSYLATION AT ASN-74; ASN-445 AND ASN-509</scope>
</reference>
<reference key="66">
    <citation type="journal article" date="1999" name="Clin. Nephrol.">
        <title>The DD genotype of the ACE gene polymorphism is associated with progression of diabetic nephropathy to end stage renal failure in IDDM.</title>
        <authorList>
            <person name="Vleming L.J."/>
            <person name="van der Pijl J.W."/>
            <person name="Lemkes H.H.P.J."/>
            <person name="Westendorp R.G.J."/>
            <person name="Maassen J.A."/>
            <person name="Daha M.R."/>
            <person name="van Es L.A."/>
            <person name="van Kooten C."/>
        </authorList>
    </citation>
    <scope>INVOLVEMENT IN MVCD3</scope>
</reference>
<reference key="67">
    <citation type="journal article" date="1999" name="Nat. Genet.">
        <title>Patterns of single-nucleotide polymorphisms in candidate genes for blood-pressure homeostasis.</title>
        <authorList>
            <person name="Halushka M.K."/>
            <person name="Fan J.-B."/>
            <person name="Bentley K."/>
            <person name="Hsie L."/>
            <person name="Shen N."/>
            <person name="Weder A."/>
            <person name="Cooper R."/>
            <person name="Lipshutz R."/>
            <person name="Chakravarti A."/>
        </authorList>
    </citation>
    <scope>VARIANTS THR-1018; VAL-1051; GLN-1279; SER-1286 AND PRO-1296</scope>
</reference>
<reference key="68">
    <citation type="journal article" date="2001" name="Circulation">
        <title>Point mutation in the stalk of angiotensin-converting enzyme causes a dramatic increase in serum angiotensin-converting enzyme but no cardiovascular disease.</title>
        <authorList>
            <person name="Kramers C."/>
            <person name="Danilov S.M."/>
            <person name="Deinum J."/>
            <person name="Balyasnikova I.V."/>
            <person name="Scharenborg N."/>
            <person name="Looman M."/>
            <person name="Boomsma F."/>
            <person name="de Keijzer M.H."/>
            <person name="van Duijn C."/>
            <person name="Martin S."/>
            <person name="Soubrier F."/>
            <person name="Adema G.J."/>
        </authorList>
    </citation>
    <scope>VARIANT LEU-1228</scope>
    <scope>ASSOCIATION WITH BENIGN SERUM INCREASE OF ANGIOTENSIN-CONVERTING ENZYME</scope>
</reference>
<reference key="69">
    <citation type="journal article" date="2003" name="Neurology">
        <title>Hereditary elevation of angiotensin converting enzyme suggesting neurosarcoidosis.</title>
        <authorList>
            <person name="Linnebank M."/>
            <person name="Kesper K."/>
            <person name="Jeub M."/>
            <person name="Urbach H."/>
            <person name="Wuellner U."/>
            <person name="Klockgether T."/>
            <person name="Schmidt S."/>
        </authorList>
    </citation>
    <scope>VARIANT LEU-1228</scope>
    <scope>ASSOCIATION WITH BENIGN SERUM INCREASE OF ANGIOTENSIN-CONVERTING ENZYME</scope>
</reference>
<reference key="70">
    <citation type="journal article" date="2004" name="Arch. Neurol.">
        <title>Meta-analysis of genetic studies in ischemic stroke: thirty-two genes involving approximately 18,000 cases and 58,000 controls.</title>
        <authorList>
            <person name="Casas J.P."/>
            <person name="Hingorani A.D."/>
            <person name="Bautista L.E."/>
            <person name="Sharma P."/>
        </authorList>
    </citation>
    <scope>INVOLVEMENT IN SUSCEPTIBILITY TO ISCHSTR</scope>
</reference>
<reference key="71">
    <citation type="journal article" date="2004" name="Neurology">
        <title>DD genotype of ACE gene is a risk factor for intracerebral hemorrhage.</title>
        <authorList>
            <person name="Slowik A."/>
            <person name="Turaj W."/>
            <person name="Dziedzic T."/>
            <person name="Haefele A."/>
            <person name="Pera J."/>
            <person name="Malecki M.T."/>
            <person name="Glodzik-Sobanska L."/>
            <person name="Szermer P."/>
            <person name="Figlewicz D.A."/>
            <person name="Szczudlik A."/>
        </authorList>
    </citation>
    <scope>INVOLVEMENT IN SUSCEPTIBILITY TO ICH</scope>
</reference>
<reference key="72">
    <citation type="journal article" date="2005" name="Nat. Genet.">
        <title>Mutations in genes in the renin-angiotensin system are associated with autosomal recessive renal tubular dysgenesis.</title>
        <authorList>
            <person name="Gribouval O."/>
            <person name="Gonzales M."/>
            <person name="Neuhaus T."/>
            <person name="Aziza J."/>
            <person name="Bieth E."/>
            <person name="Laurent N."/>
            <person name="Bouton J.M."/>
            <person name="Feuillet F."/>
            <person name="Makni S."/>
            <person name="Ben Amar H."/>
            <person name="Laube G."/>
            <person name="Delezoide A.-L."/>
            <person name="Bouvier R."/>
            <person name="Dijoud F."/>
            <person name="Ollagnon-Roman E."/>
            <person name="Roume J."/>
            <person name="Joubert M."/>
            <person name="Antignac C."/>
            <person name="Gubler M.-C."/>
        </authorList>
    </citation>
    <scope>INVOLVEMENT IN RTD</scope>
    <scope>VARIANT ARG-354</scope>
</reference>
<reference key="73">
    <citation type="journal article" date="2015" name="Proc. Natl. Acad. Sci. U.S.A.">
        <title>Neomorphic effects of recurrent somatic mutations in Yin Yang 1 in insulin-producing adenomas.</title>
        <authorList>
            <person name="Cromer M.K."/>
            <person name="Choi M."/>
            <person name="Nelson-Williams C."/>
            <person name="Fonseca A.L."/>
            <person name="Kunstman J.W."/>
            <person name="Korah R.M."/>
            <person name="Overton J.D."/>
            <person name="Mane S."/>
            <person name="Kenney B."/>
            <person name="Malchoff C.D."/>
            <person name="Stalberg P."/>
            <person name="Akerstroem G."/>
            <person name="Westin G."/>
            <person name="Hellman P."/>
            <person name="Carling T."/>
            <person name="Bjoerklund P."/>
            <person name="Lifton R.P."/>
        </authorList>
    </citation>
    <scope>VARIANT ASN-295</scope>
</reference>
<proteinExistence type="evidence at protein level"/>
<name>ACE_HUMAN</name>